<gene>
    <name evidence="38" type="primary">DCAF1</name>
    <name type="synonym">KIAA0800</name>
    <name type="synonym">RIP</name>
    <name type="synonym">VPRBP</name>
</gene>
<dbReference type="EC" id="2.7.11.1"/>
<dbReference type="EMBL" id="AB018343">
    <property type="protein sequence ID" value="BAA34520.2"/>
    <property type="status" value="ALT_INIT"/>
    <property type="molecule type" value="mRNA"/>
</dbReference>
<dbReference type="EMBL" id="AC092037">
    <property type="status" value="NOT_ANNOTATED_CDS"/>
    <property type="molecule type" value="Genomic_DNA"/>
</dbReference>
<dbReference type="EMBL" id="BC022792">
    <property type="protein sequence ID" value="AAH22792.1"/>
    <property type="molecule type" value="mRNA"/>
</dbReference>
<dbReference type="EMBL" id="BC110371">
    <property type="protein sequence ID" value="AAI10372.1"/>
    <property type="molecule type" value="mRNA"/>
</dbReference>
<dbReference type="EMBL" id="AL080145">
    <property type="protein sequence ID" value="CAB45738.1"/>
    <property type="molecule type" value="mRNA"/>
</dbReference>
<dbReference type="EMBL" id="AF061935">
    <property type="protein sequence ID" value="AAG27134.1"/>
    <property type="molecule type" value="mRNA"/>
</dbReference>
<dbReference type="CCDS" id="CCDS74943.1">
    <molecule id="Q9Y4B6-1"/>
</dbReference>
<dbReference type="CCDS" id="CCDS74944.1">
    <molecule id="Q9Y4B6-2"/>
</dbReference>
<dbReference type="PIR" id="T12529">
    <property type="entry name" value="T12529"/>
</dbReference>
<dbReference type="RefSeq" id="NP_001165375.1">
    <molecule id="Q9Y4B6-2"/>
    <property type="nucleotide sequence ID" value="NM_001171904.2"/>
</dbReference>
<dbReference type="RefSeq" id="NP_001336097.1">
    <molecule id="Q9Y4B6-1"/>
    <property type="nucleotide sequence ID" value="NM_001349168.2"/>
</dbReference>
<dbReference type="RefSeq" id="NP_001336098.1">
    <molecule id="Q9Y4B6-1"/>
    <property type="nucleotide sequence ID" value="NM_001349169.2"/>
</dbReference>
<dbReference type="RefSeq" id="NP_001336099.1">
    <molecule id="Q9Y4B6-1"/>
    <property type="nucleotide sequence ID" value="NM_001349170.2"/>
</dbReference>
<dbReference type="RefSeq" id="NP_001374507.1">
    <molecule id="Q9Y4B6-1"/>
    <property type="nucleotide sequence ID" value="NM_001387578.1"/>
</dbReference>
<dbReference type="RefSeq" id="NP_001374508.1">
    <molecule id="Q9Y4B6-1"/>
    <property type="nucleotide sequence ID" value="NM_001387579.1"/>
</dbReference>
<dbReference type="RefSeq" id="NP_001374509.1">
    <molecule id="Q9Y4B6-1"/>
    <property type="nucleotide sequence ID" value="NM_001387580.1"/>
</dbReference>
<dbReference type="RefSeq" id="NP_001374510.1">
    <molecule id="Q9Y4B6-1"/>
    <property type="nucleotide sequence ID" value="NM_001387581.1"/>
</dbReference>
<dbReference type="RefSeq" id="NP_001374511.1">
    <molecule id="Q9Y4B6-2"/>
    <property type="nucleotide sequence ID" value="NM_001387582.1"/>
</dbReference>
<dbReference type="RefSeq" id="NP_055518.1">
    <molecule id="Q9Y4B6-1"/>
    <property type="nucleotide sequence ID" value="NM_014703.3"/>
</dbReference>
<dbReference type="RefSeq" id="XP_005276810.1">
    <molecule id="Q9Y4B6-1"/>
    <property type="nucleotide sequence ID" value="XM_005276753.6"/>
</dbReference>
<dbReference type="RefSeq" id="XP_005276812.1">
    <molecule id="Q9Y4B6-1"/>
    <property type="nucleotide sequence ID" value="XM_005276755.6"/>
</dbReference>
<dbReference type="RefSeq" id="XP_011532575.1">
    <molecule id="Q9Y4B6-1"/>
    <property type="nucleotide sequence ID" value="XM_011534273.4"/>
</dbReference>
<dbReference type="RefSeq" id="XP_011532576.1">
    <property type="nucleotide sequence ID" value="XM_011534274.2"/>
</dbReference>
<dbReference type="RefSeq" id="XP_011532577.1">
    <molecule id="Q9Y4B6-1"/>
    <property type="nucleotide sequence ID" value="XM_011534275.4"/>
</dbReference>
<dbReference type="RefSeq" id="XP_011532578.1">
    <property type="nucleotide sequence ID" value="XM_011534276.2"/>
</dbReference>
<dbReference type="RefSeq" id="XP_011532579.1">
    <property type="nucleotide sequence ID" value="XM_011534277.2"/>
</dbReference>
<dbReference type="RefSeq" id="XP_016863035.1">
    <property type="nucleotide sequence ID" value="XM_017007546.1"/>
</dbReference>
<dbReference type="RefSeq" id="XP_016863036.1">
    <molecule id="Q9Y4B6-1"/>
    <property type="nucleotide sequence ID" value="XM_017007547.3"/>
</dbReference>
<dbReference type="RefSeq" id="XP_016863037.1">
    <property type="nucleotide sequence ID" value="XM_017007548.1"/>
</dbReference>
<dbReference type="RefSeq" id="XP_016863038.1">
    <molecule id="Q9Y4B6-1"/>
    <property type="nucleotide sequence ID" value="XM_017007549.3"/>
</dbReference>
<dbReference type="RefSeq" id="XP_016863039.1">
    <property type="nucleotide sequence ID" value="XM_017007550.1"/>
</dbReference>
<dbReference type="RefSeq" id="XP_047305225.1">
    <molecule id="Q9Y4B6-1"/>
    <property type="nucleotide sequence ID" value="XM_047449269.1"/>
</dbReference>
<dbReference type="RefSeq" id="XP_047305226.1">
    <molecule id="Q9Y4B6-1"/>
    <property type="nucleotide sequence ID" value="XM_047449270.1"/>
</dbReference>
<dbReference type="RefSeq" id="XP_047305227.1">
    <molecule id="Q9Y4B6-1"/>
    <property type="nucleotide sequence ID" value="XM_047449271.1"/>
</dbReference>
<dbReference type="RefSeq" id="XP_047305228.1">
    <molecule id="Q9Y4B6-1"/>
    <property type="nucleotide sequence ID" value="XM_047449272.1"/>
</dbReference>
<dbReference type="RefSeq" id="XP_047305229.1">
    <molecule id="Q9Y4B6-1"/>
    <property type="nucleotide sequence ID" value="XM_047449273.1"/>
</dbReference>
<dbReference type="RefSeq" id="XP_054204493.1">
    <molecule id="Q9Y4B6-1"/>
    <property type="nucleotide sequence ID" value="XM_054348518.1"/>
</dbReference>
<dbReference type="RefSeq" id="XP_054204494.1">
    <molecule id="Q9Y4B6-1"/>
    <property type="nucleotide sequence ID" value="XM_054348519.1"/>
</dbReference>
<dbReference type="RefSeq" id="XP_054204495.1">
    <molecule id="Q9Y4B6-1"/>
    <property type="nucleotide sequence ID" value="XM_054348520.1"/>
</dbReference>
<dbReference type="RefSeq" id="XP_054204496.1">
    <molecule id="Q9Y4B6-1"/>
    <property type="nucleotide sequence ID" value="XM_054348521.1"/>
</dbReference>
<dbReference type="RefSeq" id="XP_054204497.1">
    <molecule id="Q9Y4B6-1"/>
    <property type="nucleotide sequence ID" value="XM_054348522.1"/>
</dbReference>
<dbReference type="RefSeq" id="XP_054204498.1">
    <molecule id="Q9Y4B6-1"/>
    <property type="nucleotide sequence ID" value="XM_054348523.1"/>
</dbReference>
<dbReference type="RefSeq" id="XP_054204499.1">
    <molecule id="Q9Y4B6-1"/>
    <property type="nucleotide sequence ID" value="XM_054348524.1"/>
</dbReference>
<dbReference type="RefSeq" id="XP_054204500.1">
    <molecule id="Q9Y4B6-1"/>
    <property type="nucleotide sequence ID" value="XM_054348525.1"/>
</dbReference>
<dbReference type="RefSeq" id="XP_054204501.1">
    <molecule id="Q9Y4B6-1"/>
    <property type="nucleotide sequence ID" value="XM_054348526.1"/>
</dbReference>
<dbReference type="RefSeq" id="XP_054204502.1">
    <molecule id="Q9Y4B6-1"/>
    <property type="nucleotide sequence ID" value="XM_054348527.1"/>
</dbReference>
<dbReference type="PDB" id="3WA0">
    <property type="method" value="X-ray"/>
    <property type="resolution" value="2.31 A"/>
    <property type="chains" value="G/H=1418-1507"/>
</dbReference>
<dbReference type="PDB" id="4CC9">
    <property type="method" value="X-ray"/>
    <property type="resolution" value="2.47 A"/>
    <property type="chains" value="A=1058-1396"/>
</dbReference>
<dbReference type="PDB" id="4P7I">
    <property type="method" value="X-ray"/>
    <property type="resolution" value="2.60 A"/>
    <property type="chains" value="C/D=1447-1507"/>
</dbReference>
<dbReference type="PDB" id="4PXW">
    <property type="method" value="X-ray"/>
    <property type="resolution" value="1.72 A"/>
    <property type="chains" value="A/B=1039-1401"/>
</dbReference>
<dbReference type="PDB" id="4Z8L">
    <property type="method" value="X-ray"/>
    <property type="resolution" value="2.60 A"/>
    <property type="chains" value="A/D=1057-1396"/>
</dbReference>
<dbReference type="PDB" id="5AJA">
    <property type="method" value="X-ray"/>
    <property type="resolution" value="2.65 A"/>
    <property type="chains" value="A=1058-1396"/>
</dbReference>
<dbReference type="PDB" id="5JK7">
    <property type="method" value="X-ray"/>
    <property type="resolution" value="3.49 A"/>
    <property type="chains" value="C/E=1045-1396"/>
</dbReference>
<dbReference type="PDB" id="6N45">
    <property type="method" value="X-ray"/>
    <property type="resolution" value="2.64 A"/>
    <property type="chains" value="A/B=1475-1507"/>
</dbReference>
<dbReference type="PDB" id="6ZUE">
    <property type="method" value="X-ray"/>
    <property type="resolution" value="3.09 A"/>
    <property type="chains" value="B=1045-1396"/>
</dbReference>
<dbReference type="PDB" id="6ZX9">
    <property type="method" value="X-ray"/>
    <property type="resolution" value="2.52 A"/>
    <property type="chains" value="B=1045-1396"/>
</dbReference>
<dbReference type="PDB" id="7OKQ">
    <property type="method" value="EM"/>
    <property type="resolution" value="8.40 A"/>
    <property type="chains" value="B/F/J/N=2-1507"/>
</dbReference>
<dbReference type="PDB" id="7SSE">
    <property type="method" value="X-ray"/>
    <property type="resolution" value="1.62 A"/>
    <property type="chains" value="A/B=1077-1390"/>
</dbReference>
<dbReference type="PDB" id="7UFV">
    <property type="method" value="X-ray"/>
    <property type="resolution" value="1.90 A"/>
    <property type="chains" value="A/B=1077-1390"/>
</dbReference>
<dbReference type="PDB" id="7V7B">
    <property type="method" value="EM"/>
    <property type="resolution" value="4.20 A"/>
    <property type="chains" value="A/C=1-1507"/>
</dbReference>
<dbReference type="PDB" id="7V7C">
    <property type="method" value="EM"/>
    <property type="resolution" value="3.70 A"/>
    <property type="chains" value="A/E=1-1507"/>
</dbReference>
<dbReference type="PDB" id="8F8E">
    <property type="method" value="X-ray"/>
    <property type="resolution" value="1.55 A"/>
    <property type="chains" value="A/B=1077-1390"/>
</dbReference>
<dbReference type="PDB" id="8OG5">
    <property type="method" value="X-ray"/>
    <property type="resolution" value="2.20 A"/>
    <property type="chains" value="A=1039-1401"/>
</dbReference>
<dbReference type="PDB" id="8OG6">
    <property type="method" value="X-ray"/>
    <property type="resolution" value="2.25 A"/>
    <property type="chains" value="A=1039-1401"/>
</dbReference>
<dbReference type="PDB" id="8OG7">
    <property type="method" value="X-ray"/>
    <property type="resolution" value="2.64 A"/>
    <property type="chains" value="A=1039-1401"/>
</dbReference>
<dbReference type="PDB" id="8OG8">
    <property type="method" value="X-ray"/>
    <property type="resolution" value="2.11 A"/>
    <property type="chains" value="A=1039-1401"/>
</dbReference>
<dbReference type="PDB" id="8OG9">
    <property type="method" value="X-ray"/>
    <property type="resolution" value="2.94 A"/>
    <property type="chains" value="A=1039-1401"/>
</dbReference>
<dbReference type="PDB" id="8OGA">
    <property type="method" value="X-ray"/>
    <property type="resolution" value="2.20 A"/>
    <property type="chains" value="P=1079-1393"/>
</dbReference>
<dbReference type="PDB" id="8OGB">
    <property type="method" value="X-ray"/>
    <property type="resolution" value="2.27 A"/>
    <property type="chains" value="A=1039-1401"/>
</dbReference>
<dbReference type="PDB" id="8OGC">
    <property type="method" value="X-ray"/>
    <property type="resolution" value="2.09 A"/>
    <property type="chains" value="A=1039-1401"/>
</dbReference>
<dbReference type="PDB" id="8OO5">
    <property type="method" value="X-ray"/>
    <property type="resolution" value="2.25 A"/>
    <property type="chains" value="P=1079-1393"/>
</dbReference>
<dbReference type="PDB" id="8OOD">
    <property type="method" value="X-ray"/>
    <property type="resolution" value="1.50 A"/>
    <property type="chains" value="A=1039-1401"/>
</dbReference>
<dbReference type="PDB" id="9B9H">
    <property type="method" value="X-ray"/>
    <property type="resolution" value="2.06 A"/>
    <property type="chains" value="B=1080-1390"/>
</dbReference>
<dbReference type="PDB" id="9B9T">
    <property type="method" value="X-ray"/>
    <property type="resolution" value="2.05 A"/>
    <property type="chains" value="B=1080-1390"/>
</dbReference>
<dbReference type="PDB" id="9B9W">
    <property type="method" value="X-ray"/>
    <property type="resolution" value="1.92 A"/>
    <property type="chains" value="B=1080-1390"/>
</dbReference>
<dbReference type="PDB" id="9BA2">
    <property type="method" value="X-ray"/>
    <property type="resolution" value="2.97 A"/>
    <property type="chains" value="A=1080-1390"/>
</dbReference>
<dbReference type="PDB" id="9BHR">
    <property type="method" value="X-ray"/>
    <property type="resolution" value="1.62 A"/>
    <property type="chains" value="A/B=1077-1390"/>
</dbReference>
<dbReference type="PDB" id="9BHS">
    <property type="method" value="X-ray"/>
    <property type="resolution" value="1.43 A"/>
    <property type="chains" value="A/B=1077-1390"/>
</dbReference>
<dbReference type="PDB" id="9C1Q">
    <property type="method" value="X-ray"/>
    <property type="resolution" value="1.80 A"/>
    <property type="chains" value="A=1077-1390"/>
</dbReference>
<dbReference type="PDB" id="9D4E">
    <property type="method" value="X-ray"/>
    <property type="resolution" value="1.70 A"/>
    <property type="chains" value="A/B=1077-1390"/>
</dbReference>
<dbReference type="PDB" id="9DLW">
    <property type="method" value="X-ray"/>
    <property type="resolution" value="2.07 A"/>
    <property type="chains" value="B=1080-1390"/>
</dbReference>
<dbReference type="PDBsum" id="3WA0"/>
<dbReference type="PDBsum" id="4CC9"/>
<dbReference type="PDBsum" id="4P7I"/>
<dbReference type="PDBsum" id="4PXW"/>
<dbReference type="PDBsum" id="4Z8L"/>
<dbReference type="PDBsum" id="5AJA"/>
<dbReference type="PDBsum" id="5JK7"/>
<dbReference type="PDBsum" id="6N45"/>
<dbReference type="PDBsum" id="6ZUE"/>
<dbReference type="PDBsum" id="6ZX9"/>
<dbReference type="PDBsum" id="7OKQ"/>
<dbReference type="PDBsum" id="7SSE"/>
<dbReference type="PDBsum" id="7UFV"/>
<dbReference type="PDBsum" id="7V7B"/>
<dbReference type="PDBsum" id="7V7C"/>
<dbReference type="PDBsum" id="8F8E"/>
<dbReference type="PDBsum" id="8OG5"/>
<dbReference type="PDBsum" id="8OG6"/>
<dbReference type="PDBsum" id="8OG7"/>
<dbReference type="PDBsum" id="8OG8"/>
<dbReference type="PDBsum" id="8OG9"/>
<dbReference type="PDBsum" id="8OGA"/>
<dbReference type="PDBsum" id="8OGB"/>
<dbReference type="PDBsum" id="8OGC"/>
<dbReference type="PDBsum" id="8OO5"/>
<dbReference type="PDBsum" id="8OOD"/>
<dbReference type="PDBsum" id="9B9H"/>
<dbReference type="PDBsum" id="9B9T"/>
<dbReference type="PDBsum" id="9B9W"/>
<dbReference type="PDBsum" id="9BA2"/>
<dbReference type="PDBsum" id="9BHR"/>
<dbReference type="PDBsum" id="9BHS"/>
<dbReference type="PDBsum" id="9C1Q"/>
<dbReference type="PDBsum" id="9D4E"/>
<dbReference type="PDBsum" id="9DLW"/>
<dbReference type="EMDB" id="EMD-12964"/>
<dbReference type="EMDB" id="EMD-31765"/>
<dbReference type="EMDB" id="EMD-31766"/>
<dbReference type="SMR" id="Q9Y4B6"/>
<dbReference type="BioGRID" id="115079">
    <property type="interactions" value="253"/>
</dbReference>
<dbReference type="ComplexPortal" id="CPX-2769">
    <property type="entry name" value="CRL4-DCAF1 E3 ubiquitin ligase complex, CUL4A variant"/>
</dbReference>
<dbReference type="ComplexPortal" id="CPX-2770">
    <property type="entry name" value="CRL4-DCAF1 E3 ubiquitin ligase complex, CUL4B variant"/>
</dbReference>
<dbReference type="CORUM" id="Q9Y4B6"/>
<dbReference type="DIP" id="DIP-47048N"/>
<dbReference type="FunCoup" id="Q9Y4B6">
    <property type="interactions" value="3660"/>
</dbReference>
<dbReference type="IntAct" id="Q9Y4B6">
    <property type="interactions" value="118"/>
</dbReference>
<dbReference type="MINT" id="Q9Y4B6"/>
<dbReference type="STRING" id="9606.ENSP00000393183"/>
<dbReference type="BindingDB" id="Q9Y4B6"/>
<dbReference type="ChEMBL" id="CHEMBL5465521"/>
<dbReference type="GuidetoPHARMACOLOGY" id="3244"/>
<dbReference type="GlyCosmos" id="Q9Y4B6">
    <property type="glycosylation" value="1 site, 1 glycan"/>
</dbReference>
<dbReference type="GlyGen" id="Q9Y4B6">
    <property type="glycosylation" value="7 sites, 2 N-linked glycans (2 sites), 1 O-linked glycan (4 sites)"/>
</dbReference>
<dbReference type="iPTMnet" id="Q9Y4B6"/>
<dbReference type="PhosphoSitePlus" id="Q9Y4B6"/>
<dbReference type="BioMuta" id="DCAF1"/>
<dbReference type="DMDM" id="147742890"/>
<dbReference type="jPOST" id="Q9Y4B6"/>
<dbReference type="MassIVE" id="Q9Y4B6"/>
<dbReference type="PaxDb" id="9606-ENSP00000393183"/>
<dbReference type="PeptideAtlas" id="Q9Y4B6"/>
<dbReference type="ProteomicsDB" id="86151">
    <molecule id="Q9Y4B6-1"/>
</dbReference>
<dbReference type="ProteomicsDB" id="86152">
    <molecule id="Q9Y4B6-2"/>
</dbReference>
<dbReference type="ProteomicsDB" id="86153">
    <molecule id="Q9Y4B6-3"/>
</dbReference>
<dbReference type="Pumba" id="Q9Y4B6"/>
<dbReference type="Antibodypedia" id="31017">
    <property type="antibodies" value="136 antibodies from 23 providers"/>
</dbReference>
<dbReference type="DNASU" id="9730"/>
<dbReference type="Ensembl" id="ENST00000423656.5">
    <molecule id="Q9Y4B6-1"/>
    <property type="protein sequence ID" value="ENSP00000393183.2"/>
    <property type="gene ID" value="ENSG00000145041.17"/>
</dbReference>
<dbReference type="Ensembl" id="ENST00000504652.5">
    <molecule id="Q9Y4B6-2"/>
    <property type="protein sequence ID" value="ENSP00000421724.2"/>
    <property type="gene ID" value="ENSG00000145041.17"/>
</dbReference>
<dbReference type="Ensembl" id="ENST00000684031.1">
    <molecule id="Q9Y4B6-1"/>
    <property type="protein sequence ID" value="ENSP00000506880.1"/>
    <property type="gene ID" value="ENSG00000145041.17"/>
</dbReference>
<dbReference type="GeneID" id="9730"/>
<dbReference type="KEGG" id="hsa:9730"/>
<dbReference type="MANE-Select" id="ENST00000684031.1">
    <property type="protein sequence ID" value="ENSP00000506880.1"/>
    <property type="RefSeq nucleotide sequence ID" value="NM_001387579.1"/>
    <property type="RefSeq protein sequence ID" value="NP_001374508.1"/>
</dbReference>
<dbReference type="UCSC" id="uc032rnn.1">
    <molecule id="Q9Y4B6-1"/>
    <property type="organism name" value="human"/>
</dbReference>
<dbReference type="AGR" id="HGNC:30911"/>
<dbReference type="CTD" id="9730"/>
<dbReference type="DisGeNET" id="9730"/>
<dbReference type="GeneCards" id="DCAF1"/>
<dbReference type="HGNC" id="HGNC:30911">
    <property type="gene designation" value="DCAF1"/>
</dbReference>
<dbReference type="HPA" id="ENSG00000145041">
    <property type="expression patterns" value="Tissue enhanced (testis)"/>
</dbReference>
<dbReference type="neXtProt" id="NX_Q9Y4B6"/>
<dbReference type="OpenTargets" id="ENSG00000145041"/>
<dbReference type="PharmGKB" id="PA142670621"/>
<dbReference type="VEuPathDB" id="HostDB:ENSG00000145041"/>
<dbReference type="eggNOG" id="KOG1832">
    <property type="taxonomic scope" value="Eukaryota"/>
</dbReference>
<dbReference type="GeneTree" id="ENSGT00390000005874"/>
<dbReference type="HOGENOM" id="CLU_001785_1_0_1"/>
<dbReference type="InParanoid" id="Q9Y4B6"/>
<dbReference type="OMA" id="ECSQDQA"/>
<dbReference type="OrthoDB" id="27563at2759"/>
<dbReference type="PAN-GO" id="Q9Y4B6">
    <property type="GO annotations" value="5 GO annotations based on evolutionary models"/>
</dbReference>
<dbReference type="PhylomeDB" id="Q9Y4B6"/>
<dbReference type="PathwayCommons" id="Q9Y4B6"/>
<dbReference type="Reactome" id="R-HSA-983168">
    <property type="pathway name" value="Antigen processing: Ubiquitination &amp; Proteasome degradation"/>
</dbReference>
<dbReference type="SignaLink" id="Q9Y4B6"/>
<dbReference type="SIGNOR" id="Q9Y4B6"/>
<dbReference type="UniPathway" id="UPA00143"/>
<dbReference type="BioGRID-ORCS" id="9730">
    <property type="hits" value="73 hits in 389 CRISPR screens"/>
</dbReference>
<dbReference type="ChiTaRS" id="DCAF1">
    <property type="organism name" value="human"/>
</dbReference>
<dbReference type="EvolutionaryTrace" id="Q9Y4B6"/>
<dbReference type="GeneWiki" id="VPRBP"/>
<dbReference type="GenomeRNAi" id="9730"/>
<dbReference type="Pharos" id="Q9Y4B6">
    <property type="development level" value="Tbio"/>
</dbReference>
<dbReference type="PRO" id="PR:Q9Y4B6"/>
<dbReference type="Proteomes" id="UP000005640">
    <property type="component" value="Chromosome 3"/>
</dbReference>
<dbReference type="RNAct" id="Q9Y4B6">
    <property type="molecule type" value="protein"/>
</dbReference>
<dbReference type="Bgee" id="ENSG00000145041">
    <property type="expression patterns" value="Expressed in sperm and 185 other cell types or tissues"/>
</dbReference>
<dbReference type="GO" id="GO:0005813">
    <property type="term" value="C:centrosome"/>
    <property type="evidence" value="ECO:0000314"/>
    <property type="project" value="UniProtKB"/>
</dbReference>
<dbReference type="GO" id="GO:0080008">
    <property type="term" value="C:Cul4-RING E3 ubiquitin ligase complex"/>
    <property type="evidence" value="ECO:0000314"/>
    <property type="project" value="UniProtKB"/>
</dbReference>
<dbReference type="GO" id="GO:0005737">
    <property type="term" value="C:cytoplasm"/>
    <property type="evidence" value="ECO:0007669"/>
    <property type="project" value="UniProtKB-SubCell"/>
</dbReference>
<dbReference type="GO" id="GO:0001650">
    <property type="term" value="C:fibrillar center"/>
    <property type="evidence" value="ECO:0000314"/>
    <property type="project" value="HPA"/>
</dbReference>
<dbReference type="GO" id="GO:0005654">
    <property type="term" value="C:nucleoplasm"/>
    <property type="evidence" value="ECO:0000314"/>
    <property type="project" value="HPA"/>
</dbReference>
<dbReference type="GO" id="GO:0005634">
    <property type="term" value="C:nucleus"/>
    <property type="evidence" value="ECO:0000314"/>
    <property type="project" value="UniProtKB"/>
</dbReference>
<dbReference type="GO" id="GO:0005524">
    <property type="term" value="F:ATP binding"/>
    <property type="evidence" value="ECO:0007669"/>
    <property type="project" value="UniProtKB-KW"/>
</dbReference>
<dbReference type="GO" id="GO:1990244">
    <property type="term" value="F:histone H2AT120 kinase activity"/>
    <property type="evidence" value="ECO:0000314"/>
    <property type="project" value="UniProtKB"/>
</dbReference>
<dbReference type="GO" id="GO:0030331">
    <property type="term" value="F:nuclear estrogen receptor binding"/>
    <property type="evidence" value="ECO:0000353"/>
    <property type="project" value="UniProtKB"/>
</dbReference>
<dbReference type="GO" id="GO:0106310">
    <property type="term" value="F:protein serine kinase activity"/>
    <property type="evidence" value="ECO:0007669"/>
    <property type="project" value="RHEA"/>
</dbReference>
<dbReference type="GO" id="GO:1990756">
    <property type="term" value="F:ubiquitin-like ligase-substrate adaptor activity"/>
    <property type="evidence" value="ECO:0000314"/>
    <property type="project" value="UniProtKB"/>
</dbReference>
<dbReference type="GO" id="GO:0030183">
    <property type="term" value="P:B cell differentiation"/>
    <property type="evidence" value="ECO:0000250"/>
    <property type="project" value="UniProtKB"/>
</dbReference>
<dbReference type="GO" id="GO:0035212">
    <property type="term" value="P:cell competition in a multicellular organism"/>
    <property type="evidence" value="ECO:0000315"/>
    <property type="project" value="UniProtKB"/>
</dbReference>
<dbReference type="GO" id="GO:0000122">
    <property type="term" value="P:negative regulation of transcription by RNA polymerase II"/>
    <property type="evidence" value="ECO:0000314"/>
    <property type="project" value="UniProtKB"/>
</dbReference>
<dbReference type="GO" id="GO:0045732">
    <property type="term" value="P:positive regulation of protein catabolic process"/>
    <property type="evidence" value="ECO:0000314"/>
    <property type="project" value="UniProt"/>
</dbReference>
<dbReference type="GO" id="GO:0043687">
    <property type="term" value="P:post-translational protein modification"/>
    <property type="evidence" value="ECO:0000314"/>
    <property type="project" value="UniProtKB"/>
</dbReference>
<dbReference type="GO" id="GO:0043161">
    <property type="term" value="P:proteasome-mediated ubiquitin-dependent protein catabolic process"/>
    <property type="evidence" value="ECO:0000314"/>
    <property type="project" value="UniProtKB"/>
</dbReference>
<dbReference type="GO" id="GO:0016567">
    <property type="term" value="P:protein ubiquitination"/>
    <property type="evidence" value="ECO:0007669"/>
    <property type="project" value="UniProtKB-UniPathway"/>
</dbReference>
<dbReference type="GO" id="GO:0033151">
    <property type="term" value="P:V(D)J recombination"/>
    <property type="evidence" value="ECO:0000250"/>
    <property type="project" value="UniProtKB"/>
</dbReference>
<dbReference type="FunFam" id="2.130.10.10:FF:000055">
    <property type="entry name" value="DDB1 and CUL4-associated factor 1"/>
    <property type="match status" value="1"/>
</dbReference>
<dbReference type="Gene3D" id="1.25.10.10">
    <property type="entry name" value="Leucine-rich Repeat Variant"/>
    <property type="match status" value="1"/>
</dbReference>
<dbReference type="Gene3D" id="2.130.10.10">
    <property type="entry name" value="YVTN repeat-like/Quinoprotein amine dehydrogenase"/>
    <property type="match status" value="1"/>
</dbReference>
<dbReference type="IDEAL" id="IID00743"/>
<dbReference type="InterPro" id="IPR011989">
    <property type="entry name" value="ARM-like"/>
</dbReference>
<dbReference type="InterPro" id="IPR016024">
    <property type="entry name" value="ARM-type_fold"/>
</dbReference>
<dbReference type="InterPro" id="IPR006594">
    <property type="entry name" value="LisH"/>
</dbReference>
<dbReference type="InterPro" id="IPR033270">
    <property type="entry name" value="VPRBP/DCAF1"/>
</dbReference>
<dbReference type="InterPro" id="IPR015943">
    <property type="entry name" value="WD40/YVTN_repeat-like_dom_sf"/>
</dbReference>
<dbReference type="InterPro" id="IPR036322">
    <property type="entry name" value="WD40_repeat_dom_sf"/>
</dbReference>
<dbReference type="PANTHER" id="PTHR13129:SF4">
    <property type="entry name" value="DDB1- AND CUL4-ASSOCIATED FACTOR 1"/>
    <property type="match status" value="1"/>
</dbReference>
<dbReference type="PANTHER" id="PTHR13129">
    <property type="entry name" value="VPRBP PROTEIN-RELATED"/>
    <property type="match status" value="1"/>
</dbReference>
<dbReference type="SMART" id="SM00667">
    <property type="entry name" value="LisH"/>
    <property type="match status" value="1"/>
</dbReference>
<dbReference type="SUPFAM" id="SSF48371">
    <property type="entry name" value="ARM repeat"/>
    <property type="match status" value="1"/>
</dbReference>
<dbReference type="SUPFAM" id="SSF50978">
    <property type="entry name" value="WD40 repeat-like"/>
    <property type="match status" value="1"/>
</dbReference>
<dbReference type="PROSITE" id="PS50896">
    <property type="entry name" value="LISH"/>
    <property type="match status" value="1"/>
</dbReference>
<accession>Q9Y4B6</accession>
<accession>Q2YD74</accession>
<accession>Q8TBD9</accession>
<accession>Q9HCA1</accession>
<accession>Q9UG37</accession>
<keyword id="KW-0002">3D-structure</keyword>
<keyword id="KW-0007">Acetylation</keyword>
<keyword id="KW-0025">Alternative splicing</keyword>
<keyword id="KW-0067">ATP-binding</keyword>
<keyword id="KW-0156">Chromatin regulator</keyword>
<keyword id="KW-0963">Cytoplasm</keyword>
<keyword id="KW-0206">Cytoskeleton</keyword>
<keyword id="KW-0903">Direct protein sequencing</keyword>
<keyword id="KW-0945">Host-virus interaction</keyword>
<keyword id="KW-0418">Kinase</keyword>
<keyword id="KW-0547">Nucleotide-binding</keyword>
<keyword id="KW-0539">Nucleus</keyword>
<keyword id="KW-0597">Phosphoprotein</keyword>
<keyword id="KW-1267">Proteomics identification</keyword>
<keyword id="KW-1185">Reference proteome</keyword>
<keyword id="KW-0677">Repeat</keyword>
<keyword id="KW-0723">Serine/threonine-protein kinase</keyword>
<keyword id="KW-0804">Transcription</keyword>
<keyword id="KW-0805">Transcription regulation</keyword>
<keyword id="KW-0808">Transferase</keyword>
<keyword id="KW-0833">Ubl conjugation pathway</keyword>
<keyword id="KW-0853">WD repeat</keyword>
<name>DCAF1_HUMAN</name>
<feature type="chain" id="PRO_0000287473" description="DDB1- and CUL4-associated factor 1">
    <location>
        <begin position="1"/>
        <end position="1507"/>
    </location>
</feature>
<feature type="domain" description="Chromo">
    <location>
        <begin position="562"/>
        <end position="593"/>
    </location>
</feature>
<feature type="domain" description="LisH" evidence="2">
    <location>
        <begin position="846"/>
        <end position="878"/>
    </location>
</feature>
<feature type="repeat" description="WD 1">
    <location>
        <begin position="1091"/>
        <end position="1130"/>
    </location>
</feature>
<feature type="repeat" description="WD 2">
    <location>
        <begin position="1133"/>
        <end position="1174"/>
    </location>
</feature>
<feature type="repeat" description="WD 3">
    <location>
        <begin position="1176"/>
        <end position="1213"/>
    </location>
</feature>
<feature type="repeat" description="WD 4">
    <location>
        <begin position="1215"/>
        <end position="1247"/>
    </location>
</feature>
<feature type="repeat" description="WD 5">
    <location>
        <begin position="1248"/>
        <end position="1290"/>
    </location>
</feature>
<feature type="region of interest" description="Protein kinase-like">
    <location>
        <begin position="141"/>
        <end position="500"/>
    </location>
</feature>
<feature type="region of interest" description="Disordered" evidence="3">
    <location>
        <begin position="242"/>
        <end position="288"/>
    </location>
</feature>
<feature type="region of interest" description="Disordered" evidence="3">
    <location>
        <begin position="917"/>
        <end position="947"/>
    </location>
</feature>
<feature type="region of interest" description="WD repeat-like region">
    <location>
        <begin position="1091"/>
        <end position="1290"/>
    </location>
</feature>
<feature type="region of interest" description="Disordered" evidence="3">
    <location>
        <begin position="1393"/>
        <end position="1507"/>
    </location>
</feature>
<feature type="region of interest" description="Interaction with NF2">
    <location>
        <begin position="1418"/>
        <end position="1507"/>
    </location>
</feature>
<feature type="short sequence motif" description="DWD box 1">
    <location>
        <begin position="1242"/>
        <end position="1249"/>
    </location>
</feature>
<feature type="short sequence motif" description="DWD box 2">
    <location>
        <begin position="1278"/>
        <end position="1285"/>
    </location>
</feature>
<feature type="compositionally biased region" description="Acidic residues" evidence="3">
    <location>
        <begin position="1396"/>
        <end position="1483"/>
    </location>
</feature>
<feature type="compositionally biased region" description="Acidic residues" evidence="3">
    <location>
        <begin position="1490"/>
        <end position="1501"/>
    </location>
</feature>
<feature type="modified residue" description="Phosphoserine" evidence="46">
    <location>
        <position position="202"/>
    </location>
</feature>
<feature type="modified residue" description="Phosphoserine" evidence="45">
    <location>
        <position position="255"/>
    </location>
</feature>
<feature type="modified residue" description="N6-acetyllysine" evidence="1">
    <location>
        <position position="701"/>
    </location>
</feature>
<feature type="modified residue" description="Phosphoserine" evidence="45">
    <location>
        <position position="828"/>
    </location>
</feature>
<feature type="modified residue" description="Phosphothreonine" evidence="41">
    <location>
        <position position="888"/>
    </location>
</feature>
<feature type="modified residue" description="Phosphoserine" evidence="40 41 42 45">
    <location>
        <position position="895"/>
    </location>
</feature>
<feature type="modified residue" description="Phosphoserine" evidence="41">
    <location>
        <position position="898"/>
    </location>
</feature>
<feature type="modified residue" description="Phosphoserine" evidence="44 45">
    <location>
        <position position="979"/>
    </location>
</feature>
<feature type="modified residue" description="Phosphoserine" evidence="39 43 46">
    <location>
        <position position="1000"/>
    </location>
</feature>
<feature type="modified residue" description="Phosphoserine" evidence="45">
    <location>
        <position position="1328"/>
    </location>
</feature>
<feature type="splice variant" id="VSP_025498" description="In isoform 2." evidence="36">
    <location>
        <position position="87"/>
    </location>
</feature>
<feature type="splice variant" id="VSP_025499" description="In isoform 3." evidence="36">
    <location>
        <begin position="225"/>
        <end position="673"/>
    </location>
</feature>
<feature type="sequence variant" id="VAR_051486" description="In dbSNP:rs3749318.">
    <original>N</original>
    <variation>D</variation>
    <location>
        <position position="267"/>
    </location>
</feature>
<feature type="sequence variant" id="VAR_051487" description="Does not affect serine/threonine-protein kinase kinase activity; dbSNP:rs17712228." evidence="28">
    <original>L</original>
    <variation>F</variation>
    <location>
        <position position="378"/>
    </location>
</feature>
<feature type="sequence variant" id="VAR_051488" description="In dbSNP:rs9835229.">
    <original>L</original>
    <variation>P</variation>
    <location>
        <position position="1031"/>
    </location>
</feature>
<feature type="mutagenesis site" description="Abolishes serine/threonine-protein kinase kinase activity." evidence="28">
    <original>K</original>
    <variation>R</variation>
    <location>
        <position position="194"/>
    </location>
</feature>
<feature type="mutagenesis site" description="Abolishes serine/threonine-protein kinase kinase activity." evidence="28">
    <original>D</original>
    <variation>A</variation>
    <location>
        <position position="361"/>
    </location>
</feature>
<feature type="mutagenesis site" description="Abolishes serine/threonine-protein kinase kinase activity." evidence="28">
    <original>K</original>
    <variation>A</variation>
    <location>
        <position position="363"/>
    </location>
</feature>
<feature type="mutagenesis site" description="Loss of interaction with DDB1, no effect on interaction with TET3; when associated with A-1283." evidence="30">
    <original>R</original>
    <variation>A</variation>
    <location>
        <position position="1247"/>
    </location>
</feature>
<feature type="mutagenesis site" description="Loss of interaction with DDB1, no effect on interaction with TET3; when associated with A-1247." evidence="30">
    <original>R</original>
    <variation>A</variation>
    <location>
        <position position="1283"/>
    </location>
</feature>
<feature type="helix" evidence="50">
    <location>
        <begin position="1050"/>
        <end position="1059"/>
    </location>
</feature>
<feature type="strand" evidence="49">
    <location>
        <begin position="1062"/>
        <end position="1067"/>
    </location>
</feature>
<feature type="helix" evidence="48">
    <location>
        <begin position="1076"/>
        <end position="1078"/>
    </location>
</feature>
<feature type="strand" evidence="52">
    <location>
        <begin position="1081"/>
        <end position="1087"/>
    </location>
</feature>
<feature type="strand" evidence="52">
    <location>
        <begin position="1096"/>
        <end position="1101"/>
    </location>
</feature>
<feature type="strand" evidence="52">
    <location>
        <begin position="1107"/>
        <end position="1112"/>
    </location>
</feature>
<feature type="strand" evidence="52">
    <location>
        <begin position="1115"/>
        <end position="1121"/>
    </location>
</feature>
<feature type="turn" evidence="52">
    <location>
        <begin position="1122"/>
        <end position="1124"/>
    </location>
</feature>
<feature type="strand" evidence="52">
    <location>
        <begin position="1127"/>
        <end position="1132"/>
    </location>
</feature>
<feature type="strand" evidence="52">
    <location>
        <begin position="1138"/>
        <end position="1143"/>
    </location>
</feature>
<feature type="strand" evidence="52">
    <location>
        <begin position="1147"/>
        <end position="1156"/>
    </location>
</feature>
<feature type="strand" evidence="52">
    <location>
        <begin position="1158"/>
        <end position="1165"/>
    </location>
</feature>
<feature type="strand" evidence="52">
    <location>
        <begin position="1167"/>
        <end position="1169"/>
    </location>
</feature>
<feature type="strand" evidence="52">
    <location>
        <begin position="1171"/>
        <end position="1178"/>
    </location>
</feature>
<feature type="strand" evidence="52">
    <location>
        <begin position="1180"/>
        <end position="1184"/>
    </location>
</feature>
<feature type="strand" evidence="52">
    <location>
        <begin position="1186"/>
        <end position="1188"/>
    </location>
</feature>
<feature type="strand" evidence="52">
    <location>
        <begin position="1191"/>
        <end position="1196"/>
    </location>
</feature>
<feature type="strand" evidence="52">
    <location>
        <begin position="1199"/>
        <end position="1204"/>
    </location>
</feature>
<feature type="turn" evidence="52">
    <location>
        <begin position="1205"/>
        <end position="1207"/>
    </location>
</feature>
<feature type="strand" evidence="52">
    <location>
        <begin position="1210"/>
        <end position="1214"/>
    </location>
</feature>
<feature type="turn" evidence="52">
    <location>
        <begin position="1217"/>
        <end position="1219"/>
    </location>
</feature>
<feature type="strand" evidence="52">
    <location>
        <begin position="1234"/>
        <end position="1239"/>
    </location>
</feature>
<feature type="strand" evidence="52">
    <location>
        <begin position="1242"/>
        <end position="1245"/>
    </location>
</feature>
<feature type="turn" evidence="52">
    <location>
        <begin position="1246"/>
        <end position="1249"/>
    </location>
</feature>
<feature type="strand" evidence="52">
    <location>
        <begin position="1250"/>
        <end position="1254"/>
    </location>
</feature>
<feature type="strand" evidence="52">
    <location>
        <begin position="1259"/>
        <end position="1261"/>
    </location>
</feature>
<feature type="strand" evidence="52">
    <location>
        <begin position="1270"/>
        <end position="1275"/>
    </location>
</feature>
<feature type="strand" evidence="52">
    <location>
        <begin position="1278"/>
        <end position="1281"/>
    </location>
</feature>
<feature type="turn" evidence="52">
    <location>
        <begin position="1282"/>
        <end position="1284"/>
    </location>
</feature>
<feature type="strand" evidence="52">
    <location>
        <begin position="1287"/>
        <end position="1290"/>
    </location>
</feature>
<feature type="helix" evidence="52">
    <location>
        <begin position="1292"/>
        <end position="1294"/>
    </location>
</feature>
<feature type="strand" evidence="52">
    <location>
        <begin position="1297"/>
        <end position="1301"/>
    </location>
</feature>
<feature type="strand" evidence="52">
    <location>
        <begin position="1305"/>
        <end position="1313"/>
    </location>
</feature>
<feature type="helix" evidence="51">
    <location>
        <begin position="1314"/>
        <end position="1316"/>
    </location>
</feature>
<feature type="strand" evidence="52">
    <location>
        <begin position="1329"/>
        <end position="1338"/>
    </location>
</feature>
<feature type="turn" evidence="52">
    <location>
        <begin position="1339"/>
        <end position="1341"/>
    </location>
</feature>
<feature type="strand" evidence="52">
    <location>
        <begin position="1344"/>
        <end position="1349"/>
    </location>
</feature>
<feature type="strand" evidence="52">
    <location>
        <begin position="1351"/>
        <end position="1359"/>
    </location>
</feature>
<feature type="strand" evidence="48">
    <location>
        <begin position="1361"/>
        <end position="1363"/>
    </location>
</feature>
<feature type="strand" evidence="52">
    <location>
        <begin position="1365"/>
        <end position="1373"/>
    </location>
</feature>
<feature type="strand" evidence="52">
    <location>
        <begin position="1377"/>
        <end position="1379"/>
    </location>
</feature>
<feature type="strand" evidence="52">
    <location>
        <begin position="1382"/>
        <end position="1388"/>
    </location>
</feature>
<feature type="strand" evidence="47">
    <location>
        <begin position="1482"/>
        <end position="1485"/>
    </location>
</feature>
<feature type="strand" evidence="47">
    <location>
        <begin position="1501"/>
        <end position="1504"/>
    </location>
</feature>
<proteinExistence type="evidence at protein level"/>
<reference key="1">
    <citation type="journal article" date="1998" name="DNA Res.">
        <title>Prediction of the coding sequences of unidentified human genes. XI. The complete sequences of 100 new cDNA clones from brain which code for large proteins in vitro.</title>
        <authorList>
            <person name="Nagase T."/>
            <person name="Ishikawa K."/>
            <person name="Suyama M."/>
            <person name="Kikuno R."/>
            <person name="Miyajima N."/>
            <person name="Tanaka A."/>
            <person name="Kotani H."/>
            <person name="Nomura N."/>
            <person name="Ohara O."/>
        </authorList>
    </citation>
    <scope>NUCLEOTIDE SEQUENCE [LARGE SCALE MRNA] (ISOFORM 1)</scope>
    <source>
        <tissue>Brain</tissue>
    </source>
</reference>
<reference key="2">
    <citation type="journal article" date="2002" name="DNA Res.">
        <title>Construction of expression-ready cDNA clones for KIAA genes: manual curation of 330 KIAA cDNA clones.</title>
        <authorList>
            <person name="Nakajima D."/>
            <person name="Okazaki N."/>
            <person name="Yamakawa H."/>
            <person name="Kikuno R."/>
            <person name="Ohara O."/>
            <person name="Nagase T."/>
        </authorList>
    </citation>
    <scope>SEQUENCE REVISION</scope>
</reference>
<reference key="3">
    <citation type="journal article" date="2006" name="Nature">
        <title>The DNA sequence, annotation and analysis of human chromosome 3.</title>
        <authorList>
            <person name="Muzny D.M."/>
            <person name="Scherer S.E."/>
            <person name="Kaul R."/>
            <person name="Wang J."/>
            <person name="Yu J."/>
            <person name="Sudbrak R."/>
            <person name="Buhay C.J."/>
            <person name="Chen R."/>
            <person name="Cree A."/>
            <person name="Ding Y."/>
            <person name="Dugan-Rocha S."/>
            <person name="Gill R."/>
            <person name="Gunaratne P."/>
            <person name="Harris R.A."/>
            <person name="Hawes A.C."/>
            <person name="Hernandez J."/>
            <person name="Hodgson A.V."/>
            <person name="Hume J."/>
            <person name="Jackson A."/>
            <person name="Khan Z.M."/>
            <person name="Kovar-Smith C."/>
            <person name="Lewis L.R."/>
            <person name="Lozado R.J."/>
            <person name="Metzker M.L."/>
            <person name="Milosavljevic A."/>
            <person name="Miner G.R."/>
            <person name="Morgan M.B."/>
            <person name="Nazareth L.V."/>
            <person name="Scott G."/>
            <person name="Sodergren E."/>
            <person name="Song X.-Z."/>
            <person name="Steffen D."/>
            <person name="Wei S."/>
            <person name="Wheeler D.A."/>
            <person name="Wright M.W."/>
            <person name="Worley K.C."/>
            <person name="Yuan Y."/>
            <person name="Zhang Z."/>
            <person name="Adams C.Q."/>
            <person name="Ansari-Lari M.A."/>
            <person name="Ayele M."/>
            <person name="Brown M.J."/>
            <person name="Chen G."/>
            <person name="Chen Z."/>
            <person name="Clendenning J."/>
            <person name="Clerc-Blankenburg K.P."/>
            <person name="Chen R."/>
            <person name="Chen Z."/>
            <person name="Davis C."/>
            <person name="Delgado O."/>
            <person name="Dinh H.H."/>
            <person name="Dong W."/>
            <person name="Draper H."/>
            <person name="Ernst S."/>
            <person name="Fu G."/>
            <person name="Gonzalez-Garay M.L."/>
            <person name="Garcia D.K."/>
            <person name="Gillett W."/>
            <person name="Gu J."/>
            <person name="Hao B."/>
            <person name="Haugen E."/>
            <person name="Havlak P."/>
            <person name="He X."/>
            <person name="Hennig S."/>
            <person name="Hu S."/>
            <person name="Huang W."/>
            <person name="Jackson L.R."/>
            <person name="Jacob L.S."/>
            <person name="Kelly S.H."/>
            <person name="Kube M."/>
            <person name="Levy R."/>
            <person name="Li Z."/>
            <person name="Liu B."/>
            <person name="Liu J."/>
            <person name="Liu W."/>
            <person name="Lu J."/>
            <person name="Maheshwari M."/>
            <person name="Nguyen B.-V."/>
            <person name="Okwuonu G.O."/>
            <person name="Palmeiri A."/>
            <person name="Pasternak S."/>
            <person name="Perez L.M."/>
            <person name="Phelps K.A."/>
            <person name="Plopper F.J."/>
            <person name="Qiang B."/>
            <person name="Raymond C."/>
            <person name="Rodriguez R."/>
            <person name="Saenphimmachak C."/>
            <person name="Santibanez J."/>
            <person name="Shen H."/>
            <person name="Shen Y."/>
            <person name="Subramanian S."/>
            <person name="Tabor P.E."/>
            <person name="Verduzco D."/>
            <person name="Waldron L."/>
            <person name="Wang J."/>
            <person name="Wang J."/>
            <person name="Wang Q."/>
            <person name="Williams G.A."/>
            <person name="Wong G.K.-S."/>
            <person name="Yao Z."/>
            <person name="Zhang J."/>
            <person name="Zhang X."/>
            <person name="Zhao G."/>
            <person name="Zhou J."/>
            <person name="Zhou Y."/>
            <person name="Nelson D."/>
            <person name="Lehrach H."/>
            <person name="Reinhardt R."/>
            <person name="Naylor S.L."/>
            <person name="Yang H."/>
            <person name="Olson M."/>
            <person name="Weinstock G."/>
            <person name="Gibbs R.A."/>
        </authorList>
    </citation>
    <scope>NUCLEOTIDE SEQUENCE [LARGE SCALE GENOMIC DNA]</scope>
</reference>
<reference key="4">
    <citation type="journal article" date="2004" name="Genome Res.">
        <title>The status, quality, and expansion of the NIH full-length cDNA project: the Mammalian Gene Collection (MGC).</title>
        <authorList>
            <consortium name="The MGC Project Team"/>
        </authorList>
    </citation>
    <scope>NUCLEOTIDE SEQUENCE [LARGE SCALE MRNA] (ISOFORMS 2 AND 3)</scope>
    <source>
        <tissue>B-cell</tissue>
        <tissue>Skin</tissue>
    </source>
</reference>
<reference key="5">
    <citation type="journal article" date="2001" name="Gene">
        <title>Cytoplasmic retention of HIV-1 regulatory protein Vpr by protein-protein interaction with a novel human cytoplasmic protein VprBP.</title>
        <authorList>
            <person name="Zhang S."/>
            <person name="Feng Y."/>
            <person name="Narayan O."/>
            <person name="Zhao L.-J."/>
        </authorList>
    </citation>
    <scope>NUCLEOTIDE SEQUENCE [MRNA] OF 107-1507</scope>
    <scope>PROTEIN SEQUENCE OF 1174-1186 AND 1328-1343</scope>
    <scope>SUBCELLULAR LOCATION</scope>
    <scope>TISSUE SPECIFICITY</scope>
    <scope>INTERACTION WITH HIV-1 VPR (MICROBIAL INFECTION)</scope>
</reference>
<reference key="6">
    <citation type="journal article" date="2007" name="BMC Genomics">
        <title>The full-ORF clone resource of the German cDNA consortium.</title>
        <authorList>
            <person name="Bechtel S."/>
            <person name="Rosenfelder H."/>
            <person name="Duda A."/>
            <person name="Schmidt C.P."/>
            <person name="Ernst U."/>
            <person name="Wellenreuther R."/>
            <person name="Mehrle A."/>
            <person name="Schuster C."/>
            <person name="Bahr A."/>
            <person name="Bloecker H."/>
            <person name="Heubner D."/>
            <person name="Hoerlein A."/>
            <person name="Michel G."/>
            <person name="Wedler H."/>
            <person name="Koehrer K."/>
            <person name="Ottenwaelder B."/>
            <person name="Poustka A."/>
            <person name="Wiemann S."/>
            <person name="Schupp I."/>
        </authorList>
    </citation>
    <scope>NUCLEOTIDE SEQUENCE [LARGE SCALE MRNA] OF 375-1507</scope>
    <source>
        <tissue>Testis</tissue>
    </source>
</reference>
<reference key="7">
    <citation type="journal article" date="1994" name="J. Biol. Chem.">
        <title>Biochemical mechanism of HIV-I Vpr function. Specific interaction with a cellular protein.</title>
        <authorList>
            <person name="Zhao L.-J."/>
            <person name="Mukherjee S."/>
            <person name="Narayan O."/>
        </authorList>
    </citation>
    <scope>INTERACTION WITH HIV-1 VPR (MICROBIAL INFECTION)</scope>
</reference>
<reference key="8">
    <citation type="journal article" date="2006" name="Cell">
        <title>Global, in vivo, and site-specific phosphorylation dynamics in signaling networks.</title>
        <authorList>
            <person name="Olsen J.V."/>
            <person name="Blagoev B."/>
            <person name="Gnad F."/>
            <person name="Macek B."/>
            <person name="Kumar C."/>
            <person name="Mortensen P."/>
            <person name="Mann M."/>
        </authorList>
    </citation>
    <scope>PHOSPHORYLATION [LARGE SCALE ANALYSIS] AT SER-1000</scope>
    <scope>IDENTIFICATION BY MASS SPECTROMETRY [LARGE SCALE ANALYSIS]</scope>
    <source>
        <tissue>Cervix carcinoma</tissue>
    </source>
</reference>
<reference key="9">
    <citation type="journal article" date="2006" name="Mol. Cell">
        <title>A family of diverse Cul4-Ddb1-interacting proteins includes Cdt2, which is required for S phase destruction of the replication factor Cdt1.</title>
        <authorList>
            <person name="Jin J."/>
            <person name="Arias E.E."/>
            <person name="Chen J."/>
            <person name="Harper J.W."/>
            <person name="Walter J.C."/>
        </authorList>
    </citation>
    <scope>INTERACTION WITH DDB1</scope>
</reference>
<reference key="10">
    <citation type="journal article" date="2006" name="Nature">
        <title>Molecular architecture and assembly of the DDB1-CUL4A ubiquitin ligase machinery.</title>
        <authorList>
            <person name="Angers S."/>
            <person name="Li T."/>
            <person name="Yi X."/>
            <person name="MacCoss M.J."/>
            <person name="Moon R.T."/>
            <person name="Zheng N."/>
        </authorList>
    </citation>
    <scope>FUNCTION</scope>
</reference>
<reference key="11">
    <citation type="journal article" date="2007" name="Cell Cycle">
        <title>HIV1 Vpr arrests the cell cycle by recruiting DCAF1/VprBP, a receptor of the Cul4-DDB1 ubiquitin ligase.</title>
        <authorList>
            <person name="Le Rouzic E."/>
            <person name="Belaiedouni N."/>
            <person name="Estrabaud E."/>
            <person name="Morel M."/>
            <person name="Rain J.-C."/>
            <person name="Transy C."/>
            <person name="Margottin-Goguet F."/>
        </authorList>
    </citation>
    <scope>FUNCTION (MICROBIAL INFECTION)</scope>
</reference>
<reference key="12">
    <citation type="journal article" date="2007" name="J. Biol. Chem.">
        <title>The HIV1 protein Vpr acts to promote G2 cell cycle arrest by engaging a DDB1 and Cullin4A-containing ubiquitin ligase complex using VprBP/DCAF1 as an adaptor.</title>
        <authorList>
            <person name="Wen X."/>
            <person name="Duus K.M."/>
            <person name="Friedrich T.D."/>
            <person name="de Noronha C.M."/>
        </authorList>
    </citation>
    <scope>FUNCTION (MICROBIAL INFECTION)</scope>
</reference>
<reference key="13">
    <citation type="journal article" date="2007" name="J. Virol.">
        <title>DDB1 and Cul4A are required for human immunodeficiency virus type 1 Vpr-induced G2 arrest.</title>
        <authorList>
            <person name="Tan L."/>
            <person name="Ehrlich E."/>
            <person name="Yu X.F."/>
        </authorList>
    </citation>
    <scope>COMPONENT OF E3 UBIQUITIN-PROTEIN LIGASE COMPLEX</scope>
    <scope>INTERACTION WITH HIV-1 VPR (MICROBIAL INFECTION)</scope>
    <scope>FUNCTION (MICROBIAL INFECTION)</scope>
</reference>
<reference key="14">
    <citation type="journal article" date="2007" name="PLoS Pathog.">
        <title>HIV-1 Vpr-mediated G2 arrest involves the DDB1-CUL4A[VPRBP] E3 ubiquitin ligase.</title>
        <authorList>
            <person name="Belzile J.P."/>
            <person name="Duisit G."/>
            <person name="Rougeau N."/>
            <person name="Mercier J."/>
            <person name="Finzi A."/>
            <person name="Cohen E.A."/>
        </authorList>
    </citation>
    <scope>IDENTIFICATION BY MASS SPECTROMETRY</scope>
    <scope>FUNCTION (MICROBIAL INFECTION)</scope>
    <scope>INTERACTION WITH HIV-1 VPR (MICROBIAL INFECTION)</scope>
</reference>
<reference key="15">
    <citation type="journal article" date="2007" name="Proc. Natl. Acad. Sci. U.S.A.">
        <title>Lentiviral Vpr usurps Cul4-DDB1[VprBP] E3 ubiquitin ligase to modulate cell cycle.</title>
        <authorList>
            <person name="Hrecka K."/>
            <person name="Gierszewska M."/>
            <person name="Srivastava S."/>
            <person name="Kozaczkiewicz L."/>
            <person name="Swanson S.K."/>
            <person name="Florens L."/>
            <person name="Washburn M.P."/>
            <person name="Skowronski J."/>
        </authorList>
    </citation>
    <scope>FUNCTION (MICROBIAL INFECTION)</scope>
    <scope>COMPONENT OF DDA1-DDB1-VRPBP/DCAF1 COMPLEX</scope>
</reference>
<reference key="16">
    <citation type="journal article" date="2007" name="Virol. J.">
        <title>HIV-1 Vpr activates the G2 checkpoint through manipulation of the ubiquitin proteasome system.</title>
        <authorList>
            <person name="DeHart J.L."/>
            <person name="Zimmerman E.S."/>
            <person name="Ardon O."/>
            <person name="Monteiro-Filho C.M."/>
            <person name="Arganaraz E.R."/>
            <person name="Planelles V."/>
        </authorList>
    </citation>
    <scope>IDENTIFICATION BY MASS SPECTROMETRY</scope>
    <scope>COMPONENT OF THE CUL4A-RBX1-DDB1-VPRBP/DCAF1 COMPLEX</scope>
    <scope>FUNCTION (MICROBIAL INFECTION)</scope>
</reference>
<reference key="17">
    <citation type="journal article" date="2008" name="J. Biol. Chem.">
        <title>Assembly with the Cul4A-DDB1[DCAF1] ubiquitin ligase protects HIV-1 Vpr from proteasomal degradation.</title>
        <authorList>
            <person name="Le Rouzic E."/>
            <person name="Morel M."/>
            <person name="Ayinde D."/>
            <person name="Belaidouni N."/>
            <person name="Letienne J."/>
            <person name="Transy C."/>
            <person name="Margottin-Goguet F."/>
        </authorList>
    </citation>
    <scope>FUNCTION (MICROBIAL INFECTION)</scope>
</reference>
<reference key="18">
    <citation type="journal article" date="2008" name="J. Proteome Res.">
        <title>Combining protein-based IMAC, peptide-based IMAC, and MudPIT for efficient phosphoproteomic analysis.</title>
        <authorList>
            <person name="Cantin G.T."/>
            <person name="Yi W."/>
            <person name="Lu B."/>
            <person name="Park S.K."/>
            <person name="Xu T."/>
            <person name="Lee J.-D."/>
            <person name="Yates J.R. III"/>
        </authorList>
    </citation>
    <scope>PHOSPHORYLATION [LARGE SCALE ANALYSIS] AT SER-895</scope>
    <scope>IDENTIFICATION BY MASS SPECTROMETRY [LARGE SCALE ANALYSIS]</scope>
    <source>
        <tissue>Cervix carcinoma</tissue>
    </source>
</reference>
<reference key="19">
    <citation type="journal article" date="2008" name="Mol. Cell. Biol.">
        <title>Human immunodeficiency virus type 1 Vpr-binding protein VprBP, a WD40 protein associated with the DDB1-CUL4 E3 ubiquitin ligase, is essential for DNA replication and embryonic development.</title>
        <authorList>
            <person name="McCall C.M."/>
            <person name="Miliani de Marval P.L."/>
            <person name="Chastain P.D. II"/>
            <person name="Jackson S.C."/>
            <person name="He Y.J."/>
            <person name="Kotake Y."/>
            <person name="Cook J.G."/>
            <person name="Xiong Y."/>
        </authorList>
    </citation>
    <scope>FUNCTION</scope>
    <scope>INTERACTION WITH DDB1</scope>
    <scope>COMPONENT OF THE CUL4A-RBX1-DDB1-VPRBP/DCAF1 COMPLEX</scope>
    <scope>CHROMATIN ASSOCIATION</scope>
</reference>
<reference key="20">
    <citation type="journal article" date="2008" name="Oncogene">
        <title>VprBP targets Merlin to the Roc1-Cul4A-DDB1 E3 ligase complex for degradation.</title>
        <authorList>
            <person name="Huang J."/>
            <person name="Chen J."/>
        </authorList>
    </citation>
    <scope>FUNCTION</scope>
    <scope>INTERACTION WITH NF2</scope>
</reference>
<reference key="21">
    <citation type="journal article" date="2008" name="PLoS Pathog.">
        <title>Lentiviral Vpx accessory factor targets VprBP/DCAF1 substrate adaptor for cullin 4 E3 ubiquitin ligase to enable macrophage infection.</title>
        <authorList>
            <person name="Srivastava S."/>
            <person name="Swanson S.K."/>
            <person name="Manel N."/>
            <person name="Florens L."/>
            <person name="Washburn M.P."/>
            <person name="Skowronski J."/>
        </authorList>
    </citation>
    <scope>FUNCTION (MICROBIAL INFECTION)</scope>
    <scope>INTERACTION WITH HIV-2 VPX (MICROBIAL INFECTION)</scope>
</reference>
<reference key="22">
    <citation type="journal article" date="2008" name="Proc. Natl. Acad. Sci. U.S.A.">
        <title>A quantitative atlas of mitotic phosphorylation.</title>
        <authorList>
            <person name="Dephoure N."/>
            <person name="Zhou C."/>
            <person name="Villen J."/>
            <person name="Beausoleil S.A."/>
            <person name="Bakalarski C.E."/>
            <person name="Elledge S.J."/>
            <person name="Gygi S.P."/>
        </authorList>
    </citation>
    <scope>PHOSPHORYLATION [LARGE SCALE ANALYSIS] AT THR-888; SER-895 AND SER-898</scope>
    <scope>IDENTIFICATION BY MASS SPECTROMETRY [LARGE SCALE ANALYSIS]</scope>
    <source>
        <tissue>Cervix carcinoma</tissue>
    </source>
</reference>
<reference key="23">
    <citation type="journal article" date="2009" name="J. Virol.">
        <title>The human immunodeficiency virus type 2 Vpx protein usurps the CUL4A-DDB1 DCAF1 ubiquitin ligase to overcome a postentry block in macrophage infection.</title>
        <authorList>
            <person name="Bergamaschi A."/>
            <person name="Ayinde D."/>
            <person name="David A."/>
            <person name="Le Rouzic E."/>
            <person name="Morel M."/>
            <person name="Collin G."/>
            <person name="Descamps D."/>
            <person name="Damond F."/>
            <person name="Brun-Vezinet F."/>
            <person name="Nisole S."/>
            <person name="Margottin-Goguet F."/>
            <person name="Pancino G."/>
            <person name="Transy C."/>
        </authorList>
    </citation>
    <scope>FUNCTION (MICROBIAL INFECTION)</scope>
    <scope>INTERACTION WITH HIV-2 VPX (MICROBIAL INFECTION)</scope>
</reference>
<reference key="24">
    <citation type="journal article" date="2009" name="Nat. Cell Biol.">
        <title>Protein kinase DYRK2 is a scaffold that facilitates assembly of an E3 ligase.</title>
        <authorList>
            <person name="Maddika S."/>
            <person name="Chen J."/>
        </authorList>
    </citation>
    <scope>IDENTIFICATION IN THE EDVP COMPLEX</scope>
    <scope>FUNCTION</scope>
</reference>
<reference key="25">
    <citation type="journal article" date="2009" name="PLoS ONE">
        <title>Characterization of the molecular determinants of primary HIV-1 Vpr proteins: impact of the Q65R and R77Q substitutions on Vpr functions.</title>
        <authorList>
            <person name="Jacquot G."/>
            <person name="Le Rouzic E."/>
            <person name="Maidou-Peindara P."/>
            <person name="Maizy M."/>
            <person name="Lefrere J.J."/>
            <person name="Daneluzzi V."/>
            <person name="Monteiro-Filho C.M."/>
            <person name="Hong D."/>
            <person name="Planelles V."/>
            <person name="Morand-Joubert L."/>
            <person name="Benichou S."/>
        </authorList>
    </citation>
    <scope>INTERACTION WITH HIV-1 VPR (MICROBIAL INFECTION)</scope>
</reference>
<reference key="26">
    <citation type="journal article" date="2009" name="Sci. Signal.">
        <title>Quantitative phosphoproteomic analysis of T cell receptor signaling reveals system-wide modulation of protein-protein interactions.</title>
        <authorList>
            <person name="Mayya V."/>
            <person name="Lundgren D.H."/>
            <person name="Hwang S.-I."/>
            <person name="Rezaul K."/>
            <person name="Wu L."/>
            <person name="Eng J.K."/>
            <person name="Rodionov V."/>
            <person name="Han D.K."/>
        </authorList>
    </citation>
    <scope>PHOSPHORYLATION [LARGE SCALE ANALYSIS] AT SER-895</scope>
    <scope>IDENTIFICATION BY MASS SPECTROMETRY [LARGE SCALE ANALYSIS]</scope>
    <source>
        <tissue>Leukemic T-cell</tissue>
    </source>
</reference>
<reference key="27">
    <citation type="journal article" date="2010" name="Cell">
        <title>Merlin/NF2 suppresses tumorigenesis by inhibiting the E3 ubiquitin ligase CRL4(DCAF1) in the nucleus.</title>
        <authorList>
            <person name="Li W."/>
            <person name="You L."/>
            <person name="Cooper J."/>
            <person name="Schiavon G."/>
            <person name="Pepe-Caprio A."/>
            <person name="Zhou L."/>
            <person name="Ishii R."/>
            <person name="Giovannini M."/>
            <person name="Hanemann C.O."/>
            <person name="Long S.B."/>
            <person name="Erdjument-Bromage H."/>
            <person name="Zhou P."/>
            <person name="Tempst P."/>
            <person name="Giancotti F.G."/>
        </authorList>
    </citation>
    <scope>IDENTIFICATION BY MASS SPECTROMETRY</scope>
    <scope>SUBCELLULAR LOCATION</scope>
    <scope>INTERACTION WITH NF2</scope>
</reference>
<reference key="28">
    <citation type="journal article" date="2010" name="PLoS Biol.">
        <title>Involvement of Lgl and Mahjong/VprBP in cell competition.</title>
        <authorList>
            <person name="Tamori Y."/>
            <person name="Bialucha C.U."/>
            <person name="Tian A.G."/>
            <person name="Kajita M."/>
            <person name="Huang Y.C."/>
            <person name="Norman M."/>
            <person name="Harrison N."/>
            <person name="Poulton J."/>
            <person name="Ivanovitch K."/>
            <person name="Disch L."/>
            <person name="Liu T."/>
            <person name="Deng W.M."/>
            <person name="Fujita Y."/>
        </authorList>
    </citation>
    <scope>FUNCTION</scope>
    <scope>INTERACTION WITH LLGL1 AND LLGL2</scope>
</reference>
<reference key="29">
    <citation type="journal article" date="2010" name="J. Virol.">
        <title>Evidence for an activation domain at the amino terminus of simian immunodeficiency virus Vpx.</title>
        <authorList>
            <person name="Gramberg T."/>
            <person name="Sunseri N."/>
            <person name="Landau N.R."/>
        </authorList>
    </citation>
    <scope>FUNCTION (MICROBIAL INFECTION)</scope>
</reference>
<reference key="30">
    <citation type="journal article" date="2010" name="Sci. Signal.">
        <title>Quantitative phosphoproteomics reveals widespread full phosphorylation site occupancy during mitosis.</title>
        <authorList>
            <person name="Olsen J.V."/>
            <person name="Vermeulen M."/>
            <person name="Santamaria A."/>
            <person name="Kumar C."/>
            <person name="Miller M.L."/>
            <person name="Jensen L.J."/>
            <person name="Gnad F."/>
            <person name="Cox J."/>
            <person name="Jensen T.S."/>
            <person name="Nigg E.A."/>
            <person name="Brunak S."/>
            <person name="Mann M."/>
        </authorList>
    </citation>
    <scope>PHOSPHORYLATION [LARGE SCALE ANALYSIS] AT SER-1000</scope>
    <scope>IDENTIFICATION BY MASS SPECTROMETRY [LARGE SCALE ANALYSIS]</scope>
    <source>
        <tissue>Cervix carcinoma</tissue>
    </source>
</reference>
<reference key="31">
    <citation type="journal article" date="2011" name="BMC Syst. Biol.">
        <title>Initial characterization of the human central proteome.</title>
        <authorList>
            <person name="Burkard T.R."/>
            <person name="Planyavsky M."/>
            <person name="Kaupe I."/>
            <person name="Breitwieser F.P."/>
            <person name="Buerckstuemmer T."/>
            <person name="Bennett K.L."/>
            <person name="Superti-Furga G."/>
            <person name="Colinge J."/>
        </authorList>
    </citation>
    <scope>IDENTIFICATION BY MASS SPECTROMETRY [LARGE SCALE ANALYSIS]</scope>
</reference>
<reference key="32">
    <citation type="journal article" date="2011" name="Sci. Signal.">
        <title>System-wide temporal characterization of the proteome and phosphoproteome of human embryonic stem cell differentiation.</title>
        <authorList>
            <person name="Rigbolt K.T."/>
            <person name="Prokhorova T.A."/>
            <person name="Akimov V."/>
            <person name="Henningsen J."/>
            <person name="Johansen P.T."/>
            <person name="Kratchmarova I."/>
            <person name="Kassem M."/>
            <person name="Mann M."/>
            <person name="Olsen J.V."/>
            <person name="Blagoev B."/>
        </authorList>
    </citation>
    <scope>PHOSPHORYLATION [LARGE SCALE ANALYSIS] AT SER-979</scope>
    <scope>IDENTIFICATION BY MASS SPECTROMETRY [LARGE SCALE ANALYSIS]</scope>
</reference>
<reference key="33">
    <citation type="journal article" date="2012" name="J. Virol.">
        <title>Proteomic profiling of the human cytomegalovirus UL35 gene products reveals a role for UL35 in the DNA repair response.</title>
        <authorList>
            <person name="Salsman J."/>
            <person name="Jagannathan M."/>
            <person name="Paladino P."/>
            <person name="Chan P.K."/>
            <person name="Dellaire G."/>
            <person name="Raught B."/>
            <person name="Frappier L."/>
        </authorList>
    </citation>
    <scope>INTERACTION WITH HUMAN CYTOMEGALOVIRUS PROTEIN UL35 (MICROBIAL INFECTION)</scope>
</reference>
<reference key="34">
    <citation type="journal article" date="2013" name="J. Biol. Chem.">
        <title>Dyrk2-associated EDD-DDB1-VprBP E3 ligase inhibits telomerase by TERT degradation.</title>
        <authorList>
            <person name="Jung H.Y."/>
            <person name="Wang X."/>
            <person name="Jun S."/>
            <person name="Park J.I."/>
        </authorList>
    </citation>
    <scope>FUNCTION</scope>
    <scope>INTERACTION WITH TERT</scope>
</reference>
<reference key="35">
    <citation type="journal article" date="2012" name="Mol. Cell">
        <title>EZH2 generates a methyl degron that is recognized by the DCAF1/DDB1/CUL4 E3 ubiquitin ligase complex.</title>
        <authorList>
            <person name="Lee J.M."/>
            <person name="Lee J.S."/>
            <person name="Kim H."/>
            <person name="Kim K."/>
            <person name="Park H."/>
            <person name="Kim J.Y."/>
            <person name="Lee S.H."/>
            <person name="Kim I.S."/>
            <person name="Kim J."/>
            <person name="Lee M."/>
            <person name="Chung C.H."/>
            <person name="Seo S.B."/>
            <person name="Yoon J.B."/>
            <person name="Ko E."/>
            <person name="Noh D.Y."/>
            <person name="Kim K.I."/>
            <person name="Kim K.K."/>
            <person name="Baek S.H."/>
        </authorList>
    </citation>
    <scope>FUNCTION</scope>
</reference>
<reference key="36">
    <citation type="journal article" date="2012" name="Mol. Cell. Biol.">
        <title>Vpr-binding protein antagonizes p53-mediated transcription via direct interaction with H3 tail.</title>
        <authorList>
            <person name="Kim K."/>
            <person name="Heo K."/>
            <person name="Choi J."/>
            <person name="Jackson S."/>
            <person name="Kim H."/>
            <person name="Xiong Y."/>
            <person name="An W."/>
        </authorList>
    </citation>
    <scope>FUNCTION</scope>
    <scope>INTERACTION WITH HISTONE H3</scope>
</reference>
<reference key="37">
    <citation type="journal article" date="2013" name="J. Proteome Res.">
        <title>Toward a comprehensive characterization of a human cancer cell phosphoproteome.</title>
        <authorList>
            <person name="Zhou H."/>
            <person name="Di Palma S."/>
            <person name="Preisinger C."/>
            <person name="Peng M."/>
            <person name="Polat A.N."/>
            <person name="Heck A.J."/>
            <person name="Mohammed S."/>
        </authorList>
    </citation>
    <scope>PHOSPHORYLATION [LARGE SCALE ANALYSIS] AT SER-255; SER-828; SER-895; SER-979 AND SER-1328</scope>
    <scope>IDENTIFICATION BY MASS SPECTROMETRY [LARGE SCALE ANALYSIS]</scope>
    <source>
        <tissue>Cervix carcinoma</tissue>
        <tissue>Erythroleukemia</tissue>
    </source>
</reference>
<reference key="38">
    <citation type="journal article" date="2013" name="Mol. Cell">
        <title>VprBP has intrinsic kinase activity targeting histone H2A and represses gene transcription.</title>
        <authorList>
            <person name="Kim K."/>
            <person name="Kim J.M."/>
            <person name="Kim J.S."/>
            <person name="Choi J."/>
            <person name="Lee Y.S."/>
            <person name="Neamati N."/>
            <person name="Song J.S."/>
            <person name="Heo K."/>
            <person name="An W."/>
        </authorList>
    </citation>
    <scope>FUNCTION</scope>
    <scope>CATALYTIC ACTIVITY</scope>
    <scope>INDUCTION</scope>
    <scope>MUTAGENESIS OF LYS-194; ASP-361 AND LYS-363</scope>
    <scope>CHARACTERIZATION OF VARIANT PHE-378</scope>
</reference>
<reference key="39">
    <citation type="journal article" date="2013" name="PLoS ONE">
        <title>HIV-1 Vpr Induces the Degradation of ZIP and sZIP, Adaptors of the NuRD Chromatin Remodeling Complex, by Hijacking DCAF1/VprBP.</title>
        <authorList>
            <person name="Maudet C."/>
            <person name="Sourisce A."/>
            <person name="Dragin L."/>
            <person name="Lahouassa H."/>
            <person name="Rain J.C."/>
            <person name="Bouaziz S."/>
            <person name="Ramirez B.C."/>
            <person name="Margottin-Goguet F."/>
        </authorList>
    </citation>
    <scope>FUNCTION (MICROBIAL INFECTION)</scope>
    <scope>INTERACTION WITH HIV-1 VPR (MICROBIAL INFECTION)</scope>
</reference>
<reference key="40">
    <citation type="journal article" date="2014" name="J. Proteomics">
        <title>An enzyme assisted RP-RPLC approach for in-depth analysis of human liver phosphoproteome.</title>
        <authorList>
            <person name="Bian Y."/>
            <person name="Song C."/>
            <person name="Cheng K."/>
            <person name="Dong M."/>
            <person name="Wang F."/>
            <person name="Huang J."/>
            <person name="Sun D."/>
            <person name="Wang L."/>
            <person name="Ye M."/>
            <person name="Zou H."/>
        </authorList>
    </citation>
    <scope>PHOSPHORYLATION [LARGE SCALE ANALYSIS] AT SER-202 AND SER-1000</scope>
    <scope>IDENTIFICATION BY MASS SPECTROMETRY [LARGE SCALE ANALYSIS]</scope>
    <source>
        <tissue>Liver</tissue>
    </source>
</reference>
<reference key="41">
    <citation type="journal article" date="2013" name="Science">
        <title>CRL4 complex regulates mammalian oocyte survival and reprogramming by activation of TET proteins.</title>
        <authorList>
            <person name="Yu C."/>
            <person name="Zhang Y.L."/>
            <person name="Pan W.W."/>
            <person name="Li X.M."/>
            <person name="Wang Z.W."/>
            <person name="Ge Z.J."/>
            <person name="Zhou J.J."/>
            <person name="Cang Y."/>
            <person name="Tong C."/>
            <person name="Sun Q.Y."/>
            <person name="Fan H.Y."/>
        </authorList>
    </citation>
    <scope>INTERACTION WITH DDB1; TET1; TET2 AND TET3</scope>
    <scope>MUTAGENESIS OF ARG-1247 AND ARG-1283</scope>
</reference>
<reference key="42">
    <citation type="journal article" date="2015" name="Mol. Cell">
        <title>CRL4(VprBP) E3 ligase promotes monoubiquitylation and chromatin binding of TET dioxygenases.</title>
        <authorList>
            <person name="Nakagawa T."/>
            <person name="Lv L."/>
            <person name="Nakagawa M."/>
            <person name="Yu Y."/>
            <person name="Yu C."/>
            <person name="D'Alessio A.C."/>
            <person name="Nakayama K."/>
            <person name="Fan H.Y."/>
            <person name="Chen X."/>
            <person name="Xiong Y."/>
        </authorList>
    </citation>
    <scope>INTERACTION WITH TET1; TET2 AND TET3</scope>
</reference>
<reference key="43">
    <citation type="journal article" date="2017" name="EMBO Rep.">
        <title>Cep78 controls centrosome homeostasis by inhibiting EDD-DYRK2-DDB1VprBP.</title>
        <authorList>
            <person name="Hossain D."/>
            <person name="Javadi Esfehani Y."/>
            <person name="Das A."/>
            <person name="Tsang W.Y."/>
        </authorList>
    </citation>
    <scope>FUNCTION</scope>
    <scope>SUBCELLULAR LOCATION</scope>
    <scope>IDENTIFICATION IN THE EDVP COMPLEX</scope>
    <scope>INTERACTION WITH CEP78</scope>
</reference>
<reference key="44">
    <citation type="journal article" date="2017" name="Nature">
        <title>The Hippo kinases LATS1 and 2 control human breast cell fate via crosstalk with ERalpha.</title>
        <authorList>
            <person name="Britschgi A."/>
            <person name="Duss S."/>
            <person name="Kim S."/>
            <person name="Couto J.P."/>
            <person name="Brinkhaus H."/>
            <person name="Koren S."/>
            <person name="De Silva D."/>
            <person name="Mertz K.D."/>
            <person name="Kaup D."/>
            <person name="Varga Z."/>
            <person name="Voshol H."/>
            <person name="Vissieres A."/>
            <person name="Leroy C."/>
            <person name="Roloff T."/>
            <person name="Stadler M.B."/>
            <person name="Scheel C.H."/>
            <person name="Miraglia L.J."/>
            <person name="Orth A.P."/>
            <person name="Bonamy G.M."/>
            <person name="Reddy V.A."/>
            <person name="Bentires-Alj M."/>
        </authorList>
    </citation>
    <scope>INTERACTION WITH ESR1 AND LATS1</scope>
</reference>
<reference key="45">
    <citation type="journal article" date="2021" name="Elife">
        <title>CEP78 functions downstream of CEP350 to control biogenesis of primary cilia by negatively regulating CP110 levels.</title>
        <authorList>
            <person name="Goncalves A.B."/>
            <person name="Hasselbalch S.K."/>
            <person name="Joensen B.B."/>
            <person name="Patzke S."/>
            <person name="Martens P."/>
            <person name="Ohlsen S.K."/>
            <person name="Quinodoz M."/>
            <person name="Nikopoulos K."/>
            <person name="Suleiman R."/>
            <person name="Damsoe Jeppesen M.P."/>
            <person name="Weiss C."/>
            <person name="Christensen S.T."/>
            <person name="Rivolta C."/>
            <person name="Andersen J.S."/>
            <person name="Farinelli P."/>
            <person name="Pedersen L.B."/>
        </authorList>
    </citation>
    <scope>FUNCTION</scope>
    <scope>SUBCELLULAR LOCATION</scope>
    <scope>IDENTIFICATION IN THE EDVP COMPLEX</scope>
    <scope>INTERACTION WITH CEP78</scope>
</reference>
<reference key="46">
    <citation type="journal article" date="2014" name="Nature">
        <title>Structural basis of lentiviral subversion of a cellular protein degradation pathway.</title>
        <authorList>
            <person name="Schwefel D."/>
            <person name="Groom H.C."/>
            <person name="Boucherit V.C."/>
            <person name="Christodoulou E."/>
            <person name="Walker P.A."/>
            <person name="Stoye J.P."/>
            <person name="Bishop K.N."/>
            <person name="Taylor I.A."/>
        </authorList>
    </citation>
    <scope>X-RAY CRYSTALLOGRAPHY (2.47 ANGSTROMS) OF 1058-1396 IN COMPLEX WITH SAMHD1 AND IMMUNODEFICIENCY VIRUS PROTEIN VPX</scope>
    <scope>FUNCTION (MICROBIAL INFECTION)</scope>
    <scope>INTERACTION WITH SAMHD1 AND VIRAL VPX (MICROBIAL INFECTION)</scope>
</reference>
<comment type="function">
    <text evidence="1 6 9 12 13 15 16 18 22 24 25 26 28 33 34">Acts both as a substrate recognition component of E3 ubiquitin-protein ligase complexes and as an atypical serine/threonine-protein kinase, playing key roles in various processes such as cell cycle, telomerase regulation and histone modification. Probable substrate-specific adapter of a DCX (DDB1-CUL4-X-box) E3 ubiquitin-protein ligase complex, named CUL4A-RBX1-DDB1-DCAF1/VPRBP complex, which mediates ubiquitination and proteasome-dependent degradation of proteins such as NF2 (PubMed:23063525). Involved in the turnover of methylated proteins: recognizes and binds methylated proteins via its chromo domain, leading to ubiquitination of target proteins by the RBX1-DDB1-DCAF1/VPRBP complex (PubMed:23063525). The CUL4A-RBX1-DDB1-DCAF1/VPRBP complex is also involved in B-cell development: DCAF1 is recruited by RAG1 to ubiquitinate proteins, leading to limit error-prone repair during V(D)J recombination (By similarity). Also part of the EDVP complex, an E3 ligase complex that mediates ubiquitination of proteins such as TERT, leading to TERT degradation and telomerase inhibition (PubMed:19287380, PubMed:23362280). The EDVP complex also mediates ubiquitination and degradation of CCP110 (PubMed:28242748, PubMed:34259627). Also acts as an atypical serine/threonine-protein kinase that specifically mediates phosphorylation of 'Thr-120' of histone H2A (H2AT120ph) in a nucleosomal context, thereby repressing transcription (PubMed:24140421). H2AT120ph is present in the regulatory region of many tumor suppresor genes, down-regulates their transcription and is present at high level in a number of tumors (PubMed:24140421). Involved in JNK-mediated apoptosis during cell competition process via its interaction with LLGL1 and LLGL2 (PubMed:20644714). By acting on TET dioxygenses, essential for oocyte maintenance at the primordial follicle stage, hence essential for female fertility (By similarity).</text>
</comment>
<comment type="function">
    <text evidence="7 8 9 10 11 12 15 27">(Microbial infection) In case of infection by HIV-1 virus, it is recruited by HIV-1 Vpr in order to hijack the CUL4A-RBX1-DDB1-DCAF1/VPRBP function leading to arrest the cell cycle in G2 phase, and also to protect the viral protein from proteasomal degradation by another E3 ubiquitin ligase. The HIV-1 Vpr protein hijacks the CUL4A-RBX1-DDB1-DCAF1/VPRBP complex to promote ubiquitination and degradation of proteins such as TERT and ZIP/ZGPAT.</text>
</comment>
<comment type="function">
    <text evidence="7 14 17 20 29">(Microbial infection) In case of infection by HIV-2 virus, it is recruited by HIV-2 Vpx in order to hijack the CUL4A-RBX1-DDB1-DCAF1/VPRBP function leading to enhanced efficiency of macrophage infection and promotion of the replication of cognate primate lentiviruses in cells of monocyte/macrophage lineage.</text>
</comment>
<comment type="catalytic activity">
    <reaction evidence="28">
        <text>L-seryl-[protein] + ATP = O-phospho-L-seryl-[protein] + ADP + H(+)</text>
        <dbReference type="Rhea" id="RHEA:17989"/>
        <dbReference type="Rhea" id="RHEA-COMP:9863"/>
        <dbReference type="Rhea" id="RHEA-COMP:11604"/>
        <dbReference type="ChEBI" id="CHEBI:15378"/>
        <dbReference type="ChEBI" id="CHEBI:29999"/>
        <dbReference type="ChEBI" id="CHEBI:30616"/>
        <dbReference type="ChEBI" id="CHEBI:83421"/>
        <dbReference type="ChEBI" id="CHEBI:456216"/>
        <dbReference type="EC" id="2.7.11.1"/>
    </reaction>
</comment>
<comment type="catalytic activity">
    <reaction evidence="28">
        <text>L-threonyl-[protein] + ATP = O-phospho-L-threonyl-[protein] + ADP + H(+)</text>
        <dbReference type="Rhea" id="RHEA:46608"/>
        <dbReference type="Rhea" id="RHEA-COMP:11060"/>
        <dbReference type="Rhea" id="RHEA-COMP:11605"/>
        <dbReference type="ChEBI" id="CHEBI:15378"/>
        <dbReference type="ChEBI" id="CHEBI:30013"/>
        <dbReference type="ChEBI" id="CHEBI:30616"/>
        <dbReference type="ChEBI" id="CHEBI:61977"/>
        <dbReference type="ChEBI" id="CHEBI:456216"/>
        <dbReference type="EC" id="2.7.11.1"/>
    </reaction>
</comment>
<comment type="pathway">
    <text>Protein modification; protein ubiquitination.</text>
</comment>
<comment type="subunit">
    <text evidence="5 8 9 11 13 16 18 21 22 24 26 29 30 31 32 33 34">Component of the DCX (DDB1-CUL4-X-box) E3 ubiquitin-protein ligase complex, named CUL4A-RBX1-DDB1-DCAF1/VPRBP complex. Interacts with DDB1; the interaction is direct. Also forms a ternary complex with DDA1 and DDB1. Interacts with NF2 (via FERM domain). Component of the EDVP complex, a E3 ligase complex containing DYRK2, EDD/UBR5, DDB1 and DCAF1 (PubMed:19287380, PubMed:24357321, PubMed:28242748, PubMed:34259627). Interacts with DYRK2; the interaction is direct. Interacts with RAG1; the interaction is direct. Interacts with LLGL1 and LLGL2. Interacts with histone H3. Interacts with ESR1 and LATS1; probably recruited by LATS1 to promote ESR1 ubiquitination and ubiquitin-mediated proteasomal degradation (PubMed:28068668). Directly interacts with TET1, TET2 and TET3 (via C-terminus) (PubMed:24357321, PubMed:25557551). Interacts with CEP78; promoting DCAF1 localization to centrosomes (PubMed:28242748, PubMed:34259627).</text>
</comment>
<comment type="subunit">
    <text evidence="4 11 12 19 27 35">(Microbial infection) Interacts with HIV-1 virus Vpr protein; the interaction is direct.</text>
</comment>
<comment type="subunit">
    <text evidence="14 17 29">(Microbial infection) Interacts with HIV-2 virus Vpx protein; the interaction is direct and the complex recruits SAMHD1 to promote its ubiquitin-dependent proteasomal degradation.</text>
</comment>
<comment type="subunit">
    <text evidence="23">(Microbial infection) Interacts (via C-terminus) with human cytomegalovirus protein UL35; this interaction induces the accumulation of cells in the G2 phase of the cell cycle.</text>
</comment>
<comment type="interaction">
    <interactant intactId="EBI-1996353">
        <id>Q9Y4B6</id>
    </interactant>
    <interactant intactId="EBI-350322">
        <id>Q16531</id>
        <label>DDB1</label>
    </interactant>
    <organismsDiffer>false</organismsDiffer>
    <experiments>4</experiments>
</comment>
<comment type="interaction">
    <interactant intactId="EBI-1996353">
        <id>Q9Y4B6</id>
    </interactant>
    <interactant intactId="EBI-444209">
        <id>O95835</id>
        <label>LATS1</label>
    </interactant>
    <organismsDiffer>false</organismsDiffer>
    <experiments>4</experiments>
</comment>
<comment type="interaction">
    <interactant intactId="EBI-1996353">
        <id>Q9Y4B6</id>
    </interactant>
    <interactant intactId="EBI-3506895">
        <id>Q9NRM7</id>
        <label>LATS2</label>
    </interactant>
    <organismsDiffer>false</organismsDiffer>
    <experiments>2</experiments>
</comment>
<comment type="interaction">
    <interactant intactId="EBI-1996353">
        <id>Q9Y4B6</id>
    </interactant>
    <interactant intactId="EBI-25401874">
        <id>A0A0H3LAC5</id>
        <label>ERDMAN_2289</label>
    </interactant>
    <organismsDiffer>true</organismsDiffer>
    <experiments>2</experiments>
</comment>
<comment type="interaction">
    <interactant intactId="EBI-1996353">
        <id>Q9Y4B6</id>
    </interactant>
    <interactant intactId="EBI-6164519">
        <id>P12520</id>
        <label>vpr</label>
    </interactant>
    <organismsDiffer>true</organismsDiffer>
    <experiments>5</experiments>
</comment>
<comment type="interaction">
    <interactant intactId="EBI-1996353">
        <id>Q9Y4B6</id>
    </interactant>
    <interactant intactId="EBI-6558105">
        <id>P18045</id>
        <label>vpx</label>
    </interactant>
    <organismsDiffer>true</organismsDiffer>
    <experiments>2</experiments>
</comment>
<comment type="interaction">
    <interactant intactId="EBI-1996353">
        <id>Q9Y4B6</id>
    </interactant>
    <interactant intactId="EBI-6558117">
        <id>P19508</id>
        <label>vpx</label>
    </interactant>
    <organismsDiffer>true</organismsDiffer>
    <experiments>4</experiments>
</comment>
<comment type="interaction">
    <interactant intactId="EBI-9915372">
        <id>Q9Y4B6-3</id>
    </interactant>
    <interactant intactId="EBI-350322">
        <id>Q16531</id>
        <label>DDB1</label>
    </interactant>
    <organismsDiffer>false</organismsDiffer>
    <experiments>2</experiments>
</comment>
<comment type="interaction">
    <interactant intactId="EBI-9915372">
        <id>Q9Y4B6-3</id>
    </interactant>
    <interactant intactId="EBI-749195">
        <id>P60891</id>
        <label>PRPS1</label>
    </interactant>
    <organismsDiffer>false</organismsDiffer>
    <experiments>3</experiments>
</comment>
<comment type="interaction">
    <interactant intactId="EBI-9915372">
        <id>Q9Y4B6-3</id>
    </interactant>
    <interactant intactId="EBI-9210238">
        <id>P05928</id>
        <label>vpr</label>
    </interactant>
    <organismsDiffer>true</organismsDiffer>
    <experiments>2</experiments>
</comment>
<comment type="subcellular location">
    <subcellularLocation>
        <location evidence="4">Cytoplasm</location>
    </subcellularLocation>
    <subcellularLocation>
        <location evidence="21">Nucleus</location>
    </subcellularLocation>
    <subcellularLocation>
        <location evidence="33 34">Cytoplasm</location>
        <location evidence="33 34">Cytoskeleton</location>
        <location evidence="33 34">Microtubule organizing center</location>
        <location evidence="33 34">Centrosome</location>
    </subcellularLocation>
    <text evidence="1 33 34">Associated with chromatin in a DDB1-independent and cell cycle-dependent manner: recruited to chromatin as DNA is being replicated and is released from chromatin before mitosis (By similarity). Homogenous pancellular distribution is observed outside S-phase and a slight cytoplasmic-to-nuclear translocation from early to late S-phase (By similarity). Colocalizes with TET1 and PCNA at replicating heterochromatin during late S phase (By similarity). More concentrated in nuclei than in cytoplasm in germinal vesicle (GV) stage oocytes, zygotes and the 2-cell stage, but distributed in the cytoplasm at the MII-stage oocytes (By similarity). Localizes to centrosomes following interaction with CEP78 (PubMed:28242748, PubMed:34259627).</text>
</comment>
<comment type="alternative products">
    <event type="alternative splicing"/>
    <isoform>
        <id>Q9Y4B6-1</id>
        <name>1</name>
        <sequence type="displayed"/>
    </isoform>
    <isoform>
        <id>Q9Y4B6-2</id>
        <name>2</name>
        <sequence type="described" ref="VSP_025498"/>
    </isoform>
    <isoform>
        <id>Q9Y4B6-3</id>
        <name>3</name>
        <sequence type="described" ref="VSP_025499"/>
    </isoform>
</comment>
<comment type="tissue specificity">
    <text evidence="4">Ubiquitously expressed.</text>
</comment>
<comment type="induction">
    <text evidence="28">Up-regulated in a number of cancer cell lines (at protein level).</text>
</comment>
<comment type="domain">
    <text evidence="28">The protein kinase-like region mediates the threonine-protein kinase activity.</text>
</comment>
<comment type="domain">
    <text>The DWD boxes are required for interaction with DDB1.</text>
</comment>
<comment type="domain">
    <text evidence="25">The chromo domain with a restricted pocket directly recognizes monomethylated substrates.</text>
</comment>
<comment type="similarity">
    <text evidence="37">Belongs to the VPRBP/DCAF1 family.</text>
</comment>
<comment type="sequence caution" evidence="37">
    <conflict type="erroneous initiation">
        <sequence resource="EMBL-CDS" id="BAA34520"/>
    </conflict>
    <text>Extended N-terminus.</text>
</comment>
<sequence length="1507" mass="169007">MTTVVVHVDSKAELTTLLEQWEKEHGSGQDMVPILTRMSQLIEKETEEYRKGDPDPFDDRHPGRADPECMLGHLLRILFKNDDFMNALVNAYVMTSREPPLNTAACRLLLDIMPGLETAVVFQEKEGIVENLFKWAREADQPLRTYSTGLLGGAMENQDIAANYRDENSQLVAIVLRRLRELQLQEVALRQENKRPSPRKLSSEPLLPLDEEAVDMDYGDMAVDVVDGDQEEASGDMEISFHLDSGHKTSSRVNSTTKPEDGGLKKNKSAKQGDRENFRKAKQKLGFSSSDPDRMFVELSNSSWSEMSPWVIGTNYTLYPMTPAIEQRLILQYLTPLGEYQELLPIFMQLGSRELMMFYIDLKQTNDVLLTFEALKHLASLLLHNKFATEFVAHGGVQKLLEIPRPSMAATGVSMCLYYLSYNQDAMERVCMHPHNVLSDVVNYTLWLMECSHASGCCHATMFFSICFSFRAVLELFDRYDGLRRLVNLISTLEILNLEDQGALLSDDEIFASRQTGKHTCMALRKYFEAHLAIKLEQVKQSLQRTEGGILVHPQPPYKACSYTHEQIVEMMEFLIEYGPAQLYWEPAEVFLKLSCVQLLLQLISIACNWKTYYARNDTVRFALDVLAILTVVPKIQLQLAESVDVLDEAGSTVSTVGISIILGVAEGEFFIHDAEIQKSALQIIINCVCGPDNRISSIGKFISGTPRRKLPQNPKSSEHTLAKMWNVVQSNNGIKVLLSLLSIKMPITDADQIRALACKALVGLSRSSTVRQIISKLPLFSSCQIQQLMKEPVLQDKRSDHVKFCKYAAELIERVSGKPLLIGTDVSLARLQKADVVAQSRISFPEKELLLLIRNHLISKGLGETATVLTKEADLPMTAASHSSAFTPVTAAASPVSLPRTPRIANGIATRLGSHAAVGASAPSAPTAHPQPRPPQGPLALPGPSYAGNSPLIGRISFIRERPSPCNGRKIRVLRQKSDHGAYSQSPAIKKQLDRHLPSPPTLDSIITEYLREQHARCKNPVATCPPFSLFTPHQCPEPKQRRQAPINFTSRLNRRASFPKYGGVDGGCFDRHLIFSRFRPISVFREANEDESGFTCCAFSARERFLMLGTCTGQLKLYNVFSGQEEASYNCHNSAITHLEPSRDGSLLLTSATWSQPLSALWGMKSVFDMKHSFTEDHYVEFSKHSQDRVIGTKGDIAHIYDIQTGNKLLTLFNPDLANNYKRNCATFNPTDDLVLNDGVLWDVRSAQAIHKFDKFNMNISGVFHPNGLEVIINTEIWDLRTFHLLHTVPALDQCRVVFNHTGTVMYGAMLQADDEDDLMEERMKSPFGSSFRTFNATDYKPIATIDVKRNIFDLCTDTKDCYLAVIENQGSMDALNMDTVCRLYEVGRQRLAEDEDEEEDQEEEEQEEEDDDEDDDDTDDLDELDTDQLLEAELEEDDNNENAGEDGDNDFSPSDEELANLLEEGEDGEDEDSDADEEVELILGDTDSSDNSDLEDDIILSLNE</sequence>
<protein>
    <recommendedName>
        <fullName evidence="38">DDB1- and CUL4-associated factor 1</fullName>
    </recommendedName>
    <alternativeName>
        <fullName>HIV-1 Vpr-binding protein</fullName>
        <shortName>VprBP</shortName>
    </alternativeName>
    <alternativeName>
        <fullName>Serine/threonine-protein kinase VPRBP</fullName>
        <ecNumber>2.7.11.1</ecNumber>
    </alternativeName>
    <alternativeName>
        <fullName>Vpr-interacting protein</fullName>
    </alternativeName>
</protein>
<evidence type="ECO:0000250" key="1">
    <source>
        <dbReference type="UniProtKB" id="Q80TR8"/>
    </source>
</evidence>
<evidence type="ECO:0000255" key="2">
    <source>
        <dbReference type="PROSITE-ProRule" id="PRU00126"/>
    </source>
</evidence>
<evidence type="ECO:0000256" key="3">
    <source>
        <dbReference type="SAM" id="MobiDB-lite"/>
    </source>
</evidence>
<evidence type="ECO:0000269" key="4">
    <source>
    </source>
</evidence>
<evidence type="ECO:0000269" key="5">
    <source>
    </source>
</evidence>
<evidence type="ECO:0000269" key="6">
    <source>
    </source>
</evidence>
<evidence type="ECO:0000269" key="7">
    <source>
    </source>
</evidence>
<evidence type="ECO:0000269" key="8">
    <source>
    </source>
</evidence>
<evidence type="ECO:0000269" key="9">
    <source>
    </source>
</evidence>
<evidence type="ECO:0000269" key="10">
    <source>
    </source>
</evidence>
<evidence type="ECO:0000269" key="11">
    <source>
    </source>
</evidence>
<evidence type="ECO:0000269" key="12">
    <source>
    </source>
</evidence>
<evidence type="ECO:0000269" key="13">
    <source>
    </source>
</evidence>
<evidence type="ECO:0000269" key="14">
    <source>
    </source>
</evidence>
<evidence type="ECO:0000269" key="15">
    <source>
    </source>
</evidence>
<evidence type="ECO:0000269" key="16">
    <source>
    </source>
</evidence>
<evidence type="ECO:0000269" key="17">
    <source>
    </source>
</evidence>
<evidence type="ECO:0000269" key="18">
    <source>
    </source>
</evidence>
<evidence type="ECO:0000269" key="19">
    <source>
    </source>
</evidence>
<evidence type="ECO:0000269" key="20">
    <source>
    </source>
</evidence>
<evidence type="ECO:0000269" key="21">
    <source>
    </source>
</evidence>
<evidence type="ECO:0000269" key="22">
    <source>
    </source>
</evidence>
<evidence type="ECO:0000269" key="23">
    <source>
    </source>
</evidence>
<evidence type="ECO:0000269" key="24">
    <source>
    </source>
</evidence>
<evidence type="ECO:0000269" key="25">
    <source>
    </source>
</evidence>
<evidence type="ECO:0000269" key="26">
    <source>
    </source>
</evidence>
<evidence type="ECO:0000269" key="27">
    <source>
    </source>
</evidence>
<evidence type="ECO:0000269" key="28">
    <source>
    </source>
</evidence>
<evidence type="ECO:0000269" key="29">
    <source>
    </source>
</evidence>
<evidence type="ECO:0000269" key="30">
    <source>
    </source>
</evidence>
<evidence type="ECO:0000269" key="31">
    <source>
    </source>
</evidence>
<evidence type="ECO:0000269" key="32">
    <source>
    </source>
</evidence>
<evidence type="ECO:0000269" key="33">
    <source>
    </source>
</evidence>
<evidence type="ECO:0000269" key="34">
    <source>
    </source>
</evidence>
<evidence type="ECO:0000269" key="35">
    <source>
    </source>
</evidence>
<evidence type="ECO:0000303" key="36">
    <source>
    </source>
</evidence>
<evidence type="ECO:0000305" key="37"/>
<evidence type="ECO:0000312" key="38">
    <source>
        <dbReference type="HGNC" id="HGNC:30911"/>
    </source>
</evidence>
<evidence type="ECO:0007744" key="39">
    <source>
    </source>
</evidence>
<evidence type="ECO:0007744" key="40">
    <source>
    </source>
</evidence>
<evidence type="ECO:0007744" key="41">
    <source>
    </source>
</evidence>
<evidence type="ECO:0007744" key="42">
    <source>
    </source>
</evidence>
<evidence type="ECO:0007744" key="43">
    <source>
    </source>
</evidence>
<evidence type="ECO:0007744" key="44">
    <source>
    </source>
</evidence>
<evidence type="ECO:0007744" key="45">
    <source>
    </source>
</evidence>
<evidence type="ECO:0007744" key="46">
    <source>
    </source>
</evidence>
<evidence type="ECO:0007829" key="47">
    <source>
        <dbReference type="PDB" id="3WA0"/>
    </source>
</evidence>
<evidence type="ECO:0007829" key="48">
    <source>
        <dbReference type="PDB" id="4CC9"/>
    </source>
</evidence>
<evidence type="ECO:0007829" key="49">
    <source>
        <dbReference type="PDB" id="5JK7"/>
    </source>
</evidence>
<evidence type="ECO:0007829" key="50">
    <source>
        <dbReference type="PDB" id="6ZX9"/>
    </source>
</evidence>
<evidence type="ECO:0007829" key="51">
    <source>
        <dbReference type="PDB" id="8OG5"/>
    </source>
</evidence>
<evidence type="ECO:0007829" key="52">
    <source>
        <dbReference type="PDB" id="8OOD"/>
    </source>
</evidence>
<organism>
    <name type="scientific">Homo sapiens</name>
    <name type="common">Human</name>
    <dbReference type="NCBI Taxonomy" id="9606"/>
    <lineage>
        <taxon>Eukaryota</taxon>
        <taxon>Metazoa</taxon>
        <taxon>Chordata</taxon>
        <taxon>Craniata</taxon>
        <taxon>Vertebrata</taxon>
        <taxon>Euteleostomi</taxon>
        <taxon>Mammalia</taxon>
        <taxon>Eutheria</taxon>
        <taxon>Euarchontoglires</taxon>
        <taxon>Primates</taxon>
        <taxon>Haplorrhini</taxon>
        <taxon>Catarrhini</taxon>
        <taxon>Hominidae</taxon>
        <taxon>Homo</taxon>
    </lineage>
</organism>